<comment type="function">
    <text evidence="8 10 12 15 24 28 29 30 31 32 33 35 39">Tyrosine phosphatase enzyme that plays important roles in controlling immune signaling pathways and fundamental physiological processes such as hematopoiesis (PubMed:14739280, PubMed:29925997). Dephosphorylates and negatively regulate several receptor tyrosine kinases (RTKs) such as EGFR, PDGFR and FGFR, thereby modulating their signaling activities (PubMed:21258366, PubMed:9733788). When recruited to immunoreceptor tyrosine-based inhibitory motif (ITIM)-containing receptors such as immunoglobulin-like transcript 2/LILRB1, programmed cell death protein 1/PDCD1, CD3D, CD22, CLEC12A and other receptors involved in immune regulation, initiates their dephosphorylation and subsequently inhibits downstream signaling events (PubMed:11907092, PubMed:14739280, PubMed:37932456, PubMed:38166031). Modulates the signaling of several cytokine receptors including IL-4 receptor (PubMed:9065461). Additionally, targets multiple cytoplasmic signaling molecules including STING1, LCK or STAT1 among others involved in diverse cellular processes including modulation of T-cell activation or cGAS-STING signaling (PubMed:34811497, PubMed:38532423). Within the nucleus, negatively regulates the activity of some transcription factors such as NFAT5 via direct dephosphorylation. Also acts as a key transcriptional regulator of hepatic gluconeogenesis by controlling recruitment of RNA polymerase II to the PCK1 promoter together with STAT5A (PubMed:37595871).</text>
</comment>
<comment type="catalytic activity">
    <reaction evidence="6 28 33">
        <text>O-phospho-L-tyrosyl-[protein] + H2O = L-tyrosyl-[protein] + phosphate</text>
        <dbReference type="Rhea" id="RHEA:10684"/>
        <dbReference type="Rhea" id="RHEA-COMP:10136"/>
        <dbReference type="Rhea" id="RHEA-COMP:20101"/>
        <dbReference type="ChEBI" id="CHEBI:15377"/>
        <dbReference type="ChEBI" id="CHEBI:43474"/>
        <dbReference type="ChEBI" id="CHEBI:46858"/>
        <dbReference type="ChEBI" id="CHEBI:61978"/>
        <dbReference type="EC" id="3.1.3.48"/>
    </reaction>
</comment>
<comment type="subunit">
    <text evidence="2 3 9 10 11 14 16 17 19 20 21 22 23 24 25 27 30 33 36 37 38 40">Monomer. Interacts with MTUS1 (By similarity). Interacts with MILR1 (tyrosine-phosphorylated) (By similarity). Interacts with KIT (By similarity). Interacts with SIRPA/PTPNS1 (PubMed:9712903). Interacts with LILRB1 and LILRB2 (PubMed:9285411, PubMed:9842885). Interacts with LILRB4 (PubMed:16493035, PubMed:9151699). Interacts with FCRL2 and FCRL4 (PubMed:11162587, PubMed:14597715). Interacts with FCRL3 and FCRL6 (tyrosine phosphorylated form) (PubMed:11162587, PubMed:19843936, PubMed:20933011). Interacts with CD84 (PubMed:11414741). Interacts with CD300LF (PubMed:15184070). Interacts with CDK2 (PubMed:21262353). Interacts with KIR2DL1; the interaction is enhanced by ARRB2 (PubMed:18604210). Interacts (via SH2 1 domain) with ROS1; the interaction is direct and promotes ROS1 dephosphorylation (PubMed:11266449). Interacts with EGFR; inhibits EGFR-dependent activation of MAPK/ERK (PubMed:21258366). Interacts with the tyrosine phosphorylated form of PDPK1 (PubMed:19591923). Interacts with CEACAM1 (via cytoplasmic domain); this interaction depends on the monomer/dimer equilibrium and is phosphorylation-dependent (By similarity). Interacts with MPIG6B (via ITIM motif) (PubMed:23112346). Interacts with KLRI1 and KLRI2 (By similarity). Interacts with moesin/MSN. Interacts with CLEC12B (via ITIM motif). Interacts with polymerase II components POLR2C and POLR2J; these interactions recruit RNA polymerase II to the PCK1 promoter (PubMed:37595871). Interacts with TNFRSF10A; this interaction enables the inhibition of T-cell receptor signaling via LCK (PubMed:38532423).</text>
</comment>
<comment type="subunit">
    <text evidence="29">(Microbial infection) Interacts with HIV-1 Vif; this interaction promotes the suppression of cytokine production.</text>
</comment>
<comment type="interaction">
    <interactant intactId="EBI-78260">
        <id>P29350</id>
    </interactant>
    <interactant intactId="EBI-78060">
        <id>Q14790</id>
        <label>CASP8</label>
    </interactant>
    <organismsDiffer>false</organismsDiffer>
    <experiments>3</experiments>
</comment>
<comment type="interaction">
    <interactant intactId="EBI-78260">
        <id>P29350</id>
    </interactant>
    <interactant intactId="EBI-78277">
        <id>P20273</id>
        <label>CD22</label>
    </interactant>
    <organismsDiffer>false</organismsDiffer>
    <experiments>4</experiments>
</comment>
<comment type="interaction">
    <interactant intactId="EBI-78260">
        <id>P29350</id>
    </interactant>
    <interactant intactId="EBI-1580565">
        <id>Q9BZW8</id>
        <label>CD244</label>
    </interactant>
    <organismsDiffer>false</organismsDiffer>
    <experiments>2</experiments>
</comment>
<comment type="interaction">
    <interactant intactId="EBI-78260">
        <id>P29350</id>
    </interactant>
    <interactant intactId="EBI-3906571">
        <id>P20138</id>
        <label>CD33</label>
    </interactant>
    <organismsDiffer>false</organismsDiffer>
    <experiments>10</experiments>
</comment>
<comment type="interaction">
    <interactant intactId="EBI-78260">
        <id>P29350</id>
    </interactant>
    <interactant intactId="EBI-6139068">
        <id>P11049</id>
        <label>CD37</label>
    </interactant>
    <organismsDiffer>false</organismsDiffer>
    <experiments>4</experiments>
</comment>
<comment type="interaction">
    <interactant intactId="EBI-78260">
        <id>P29350</id>
    </interactant>
    <interactant intactId="EBI-617321">
        <id>P19235</id>
        <label>EPOR</label>
    </interactant>
    <organismsDiffer>false</organismsDiffer>
    <experiments>11</experiments>
</comment>
<comment type="interaction">
    <interactant intactId="EBI-78260">
        <id>P29350</id>
    </interactant>
    <interactant intactId="EBI-724784">
        <id>P31994</id>
        <label>FCGR2B</label>
    </interactant>
    <organismsDiffer>false</organismsDiffer>
    <experiments>3</experiments>
</comment>
<comment type="interaction">
    <interactant intactId="EBI-78260">
        <id>P29350</id>
    </interactant>
    <interactant intactId="EBI-741101">
        <id>Q13643</id>
        <label>FHL3</label>
    </interactant>
    <organismsDiffer>false</organismsDiffer>
    <experiments>3</experiments>
</comment>
<comment type="interaction">
    <interactant intactId="EBI-78260">
        <id>P29350</id>
    </interactant>
    <interactant intactId="EBI-401755">
        <id>P62993</id>
        <label>GRB2</label>
    </interactant>
    <organismsDiffer>false</organismsDiffer>
    <experiments>3</experiments>
</comment>
<comment type="interaction">
    <interactant intactId="EBI-78260">
        <id>P29350</id>
    </interactant>
    <interactant intactId="EBI-475981">
        <id>P08069</id>
        <label>IGF1R</label>
    </interactant>
    <organismsDiffer>false</organismsDiffer>
    <experiments>3</experiments>
</comment>
<comment type="interaction">
    <interactant intactId="EBI-78260">
        <id>P29350</id>
    </interactant>
    <interactant intactId="EBI-1005487">
        <id>P35968</id>
        <label>KDR</label>
    </interactant>
    <organismsDiffer>false</organismsDiffer>
    <experiments>2</experiments>
</comment>
<comment type="interaction">
    <interactant intactId="EBI-78260">
        <id>P29350</id>
    </interactant>
    <interactant intactId="EBI-8684277">
        <id>P43626</id>
        <label>KIR2DL1</label>
    </interactant>
    <organismsDiffer>false</organismsDiffer>
    <experiments>4</experiments>
</comment>
<comment type="interaction">
    <interactant intactId="EBI-78260">
        <id>P29350</id>
    </interactant>
    <interactant intactId="EBI-8632435">
        <id>P43628</id>
        <label>KIR2DL3</label>
    </interactant>
    <organismsDiffer>false</organismsDiffer>
    <experiments>13</experiments>
</comment>
<comment type="interaction">
    <interactant intactId="EBI-78260">
        <id>P29350</id>
    </interactant>
    <interactant intactId="EBI-965864">
        <id>Q6GTX8</id>
        <label>LAIR1</label>
    </interactant>
    <organismsDiffer>false</organismsDiffer>
    <experiments>5</experiments>
</comment>
<comment type="interaction">
    <interactant intactId="EBI-78260">
        <id>P29350</id>
    </interactant>
    <interactant intactId="EBI-1348">
        <id>P06239</id>
        <label>LCK</label>
    </interactant>
    <organismsDiffer>false</organismsDiffer>
    <experiments>5</experiments>
</comment>
<comment type="interaction">
    <interactant intactId="EBI-78260">
        <id>P29350</id>
    </interactant>
    <interactant intactId="EBI-2805262">
        <id>Q8NHL6</id>
        <label>LILRB1</label>
    </interactant>
    <organismsDiffer>false</organismsDiffer>
    <experiments>4</experiments>
</comment>
<comment type="interaction">
    <interactant intactId="EBI-78260">
        <id>P29350</id>
    </interactant>
    <interactant intactId="EBI-2816428">
        <id>Q8N423</id>
        <label>LILRB2</label>
    </interactant>
    <organismsDiffer>false</organismsDiffer>
    <experiments>3</experiments>
</comment>
<comment type="interaction">
    <interactant intactId="EBI-78260">
        <id>P29350</id>
    </interactant>
    <interactant intactId="EBI-2830524">
        <id>O75022</id>
        <label>LILRB3</label>
    </interactant>
    <organismsDiffer>false</organismsDiffer>
    <experiments>4</experiments>
</comment>
<comment type="interaction">
    <interactant intactId="EBI-78260">
        <id>P29350</id>
    </interactant>
    <interactant intactId="EBI-2805248">
        <id>Q8NHJ6</id>
        <label>LILRB4</label>
    </interactant>
    <organismsDiffer>false</organismsDiffer>
    <experiments>4</experiments>
</comment>
<comment type="interaction">
    <interactant intactId="EBI-78260">
        <id>P29350</id>
    </interactant>
    <interactant intactId="EBI-15828651">
        <id>O94916-1</id>
        <label>NFAT5</label>
    </interactant>
    <organismsDiffer>false</organismsDiffer>
    <experiments>4</experiments>
</comment>
<comment type="interaction">
    <interactant intactId="EBI-78260">
        <id>P29350</id>
    </interactant>
    <interactant intactId="EBI-716404">
        <id>P16284</id>
        <label>PECAM1</label>
    </interactant>
    <organismsDiffer>false</organismsDiffer>
    <experiments>4</experiments>
</comment>
<comment type="interaction">
    <interactant intactId="EBI-78260">
        <id>P29350</id>
    </interactant>
    <interactant intactId="EBI-965833">
        <id>Q9UKJ1</id>
        <label>PILRA</label>
    </interactant>
    <organismsDiffer>false</organismsDiffer>
    <experiments>5</experiments>
</comment>
<comment type="interaction">
    <interactant intactId="EBI-78260">
        <id>P29350</id>
    </interactant>
    <interactant intactId="EBI-2266035">
        <id>Q05209</id>
        <label>PTPN12</label>
    </interactant>
    <organismsDiffer>false</organismsDiffer>
    <experiments>3</experiments>
</comment>
<comment type="interaction">
    <interactant intactId="EBI-78260">
        <id>P29350</id>
    </interactant>
    <interactant intactId="EBI-7371065">
        <id>P08922</id>
        <label>ROS1</label>
    </interactant>
    <organismsDiffer>false</organismsDiffer>
    <experiments>2</experiments>
</comment>
<comment type="interaction">
    <interactant intactId="EBI-78260">
        <id>P29350</id>
    </interactant>
    <interactant intactId="EBI-2873538">
        <id>Q8N1K5</id>
        <label>THEMIS</label>
    </interactant>
    <organismsDiffer>false</organismsDiffer>
    <experiments>4</experiments>
</comment>
<comment type="interaction">
    <interactant intactId="EBI-78260">
        <id>P29350</id>
    </interactant>
    <interactant intactId="EBI-80022">
        <id>O35274</id>
        <label>Ppp1r9b</label>
    </interactant>
    <organismsDiffer>true</organismsDiffer>
    <experiments>2</experiments>
</comment>
<comment type="interaction">
    <interactant intactId="EBI-78260">
        <id>P29350</id>
    </interactant>
    <interactant intactId="EBI-2504426">
        <id>B7UM99</id>
        <label>tir</label>
    </interactant>
    <organismsDiffer>true</organismsDiffer>
    <experiments>4</experiments>
</comment>
<comment type="interaction">
    <interactant intactId="EBI-78260">
        <id>P29350</id>
    </interactant>
    <interactant intactId="EBI-6480811">
        <id>Q7DB77</id>
        <label>tir</label>
    </interactant>
    <organismsDiffer>true</organismsDiffer>
    <experiments>2</experiments>
</comment>
<comment type="interaction">
    <interactant intactId="EBI-7399369">
        <id>P29350-3</id>
    </interactant>
    <interactant intactId="EBI-702142">
        <id>Q05397</id>
        <label>PTK2</label>
    </interactant>
    <organismsDiffer>false</organismsDiffer>
    <experiments>3</experiments>
</comment>
<comment type="subcellular location">
    <subcellularLocation>
        <location evidence="29 35">Cytoplasm</location>
    </subcellularLocation>
    <subcellularLocation>
        <location evidence="30">Nucleus</location>
    </subcellularLocation>
    <text evidence="1">In neurons, translocates into the nucleus after treatment with angiotensin II (By similarity). Shuttles between the cytoplasm and nucleus via its association with PDPK1.</text>
</comment>
<comment type="alternative products">
    <event type="alternative splicing"/>
    <isoform>
        <id>P29350-1</id>
        <name>1</name>
        <name>Long</name>
        <sequence type="displayed"/>
    </isoform>
    <isoform>
        <id>P29350-3</id>
        <name>2</name>
        <sequence type="described" ref="VSP_007775"/>
    </isoform>
    <isoform>
        <id>P29350-2</id>
        <name>3</name>
        <name>Short</name>
        <sequence type="described" ref="VSP_005129 VSP_005130"/>
    </isoform>
    <isoform>
        <id>P29350-4</id>
        <name>4</name>
        <name>70-kDa</name>
        <name>SHP-1L</name>
        <sequence type="described" ref="VSP_044447"/>
    </isoform>
</comment>
<comment type="tissue specificity">
    <text evidence="18">Isoform 1 is expressed in hematopoietic cells. Isoform 2 is expressed in non-hematopoietic cells.</text>
</comment>
<comment type="domain">
    <text evidence="13 26">The N-terminal SH2 domain functions as an auto-inhibitory domain, blocking the catalytic domain in the ligand-free close conformation.</text>
</comment>
<comment type="PTM">
    <text evidence="2 8 32 33 34">Phosphorylated on tyrosine residues. Binding of KITLG/SCF to KIT increases tyrosine phosphorylation (By similarity). Phosphorylation at Tyr-564 by LYN enhances phosphatase activity. Phosphorylation at Thr-394 by TAOK3 leads to polyubiquitination and subsequent proteasomal degradation (PubMed:38166031).</text>
</comment>
<comment type="PTM">
    <text evidence="28 32">Ubiquitinated after phosphorylation by TAOK3 (PubMed:38166031). Ubiquitinated by a cooperation between ITCH and WWP2 via 'Lys-27'-mediated polyubiquitin chains resulting in the reduction of its association with LCK (PubMed:29925997).</text>
</comment>
<comment type="similarity">
    <text evidence="44">Belongs to the protein-tyrosine phosphatase family. Non-receptor class 2 subfamily.</text>
</comment>
<comment type="online information" name="Atlas of Genetics and Cytogenetics in Oncology and Haematology">
    <link uri="https://atlasgeneticsoncology.org/gene/41920/PTPN6"/>
</comment>
<feature type="chain" id="PRO_0000094758" description="Tyrosine-protein phosphatase non-receptor type 6">
    <location>
        <begin position="1"/>
        <end position="595"/>
    </location>
</feature>
<feature type="domain" description="SH2 1" evidence="5">
    <location>
        <begin position="4"/>
        <end position="100"/>
    </location>
</feature>
<feature type="domain" description="SH2 2" evidence="5">
    <location>
        <begin position="110"/>
        <end position="213"/>
    </location>
</feature>
<feature type="domain" description="Tyrosine-protein phosphatase" evidence="4">
    <location>
        <begin position="244"/>
        <end position="515"/>
    </location>
</feature>
<feature type="region of interest" description="Disordered" evidence="7">
    <location>
        <begin position="535"/>
        <end position="595"/>
    </location>
</feature>
<feature type="compositionally biased region" description="Basic and acidic residues" evidence="7">
    <location>
        <begin position="558"/>
        <end position="589"/>
    </location>
</feature>
<feature type="active site" description="Phosphocysteine intermediate">
    <location>
        <position position="453"/>
    </location>
</feature>
<feature type="binding site" evidence="1">
    <location>
        <position position="419"/>
    </location>
    <ligand>
        <name>substrate</name>
    </ligand>
</feature>
<feature type="binding site" evidence="1">
    <location>
        <begin position="453"/>
        <end position="459"/>
    </location>
    <ligand>
        <name>substrate</name>
    </ligand>
</feature>
<feature type="binding site" evidence="1">
    <location>
        <position position="500"/>
    </location>
    <ligand>
        <name>substrate</name>
    </ligand>
</feature>
<feature type="modified residue" description="Phosphoserine" evidence="3">
    <location>
        <position position="10"/>
    </location>
</feature>
<feature type="modified residue" description="Phosphoserine" evidence="2">
    <location>
        <position position="57"/>
    </location>
</feature>
<feature type="modified residue" description="Phosphotyrosine" evidence="45">
    <location>
        <position position="64"/>
    </location>
</feature>
<feature type="modified residue" description="Phosphotyrosine" evidence="2">
    <location>
        <position position="377"/>
    </location>
</feature>
<feature type="modified residue" description="Phosphothreonine; by TAOK3" evidence="32">
    <location>
        <position position="394"/>
    </location>
</feature>
<feature type="modified residue" description="Phosphotyrosine" evidence="2">
    <location>
        <position position="536"/>
    </location>
</feature>
<feature type="modified residue" description="Phosphotyrosine; by LYN" evidence="8">
    <location>
        <position position="564"/>
    </location>
</feature>
<feature type="cross-link" description="Glycyl lysine isopeptide (Lys-Gly) (interchain with G-Cter in ubiquitin)" evidence="28">
    <location>
        <position position="308"/>
    </location>
</feature>
<feature type="splice variant" id="VSP_005129" description="In isoform 3." evidence="43">
    <location>
        <begin position="1"/>
        <end position="39"/>
    </location>
</feature>
<feature type="splice variant" id="VSP_007775" description="In isoform 2." evidence="42">
    <original>MVR</original>
    <variation>MLSRG</variation>
    <location>
        <begin position="1"/>
        <end position="3"/>
    </location>
</feature>
<feature type="splice variant" id="VSP_005130" description="In isoform 3." evidence="43">
    <original>SLSVR</original>
    <variation>MLSRG</variation>
    <location>
        <begin position="40"/>
        <end position="44"/>
    </location>
</feature>
<feature type="splice variant" id="VSP_044447" description="In isoform 4." evidence="41">
    <original>HKEDVYENLHTKNKREEKVKKQRSADKEKSKGSLKRK</original>
    <variation>SLESSAGTVAASPVRRGGQRGLPVPGPPVLSPDLHQLPVLAPLHPAADTRRMCMRTCTLRTRGRRK</variation>
    <location>
        <begin position="559"/>
        <end position="595"/>
    </location>
</feature>
<feature type="mutagenesis site" description="Almost complete loss of ubiquitination by ITCH and WWP2." evidence="28">
    <original>K</original>
    <variation>R</variation>
    <location>
        <position position="308"/>
    </location>
</feature>
<feature type="mutagenesis site" description="No loss in substrate binding but impaired activity." evidence="12">
    <original>D</original>
    <variation>A</variation>
    <location>
        <position position="419"/>
    </location>
</feature>
<feature type="mutagenesis site" description="Stabilizes the association between phosphatase and substrates." evidence="30">
    <original>C</original>
    <variation>S</variation>
    <location>
        <position position="453"/>
    </location>
</feature>
<feature type="mutagenesis site" description="Complete loss of phosphorylation by LYN." evidence="8">
    <original>Y</original>
    <variation>F</variation>
    <location>
        <position position="564"/>
    </location>
</feature>
<feature type="sequence conflict" description="In Ref. 5; AAA82880." evidence="44" ref="5">
    <original>H</original>
    <variation>L</variation>
    <location>
        <position position="6"/>
    </location>
</feature>
<feature type="sequence conflict" description="In Ref. 4; AAA36610 and 7; AAD53317." evidence="44" ref="4 7">
    <original>L</original>
    <variation>V</variation>
    <location>
        <position position="86"/>
    </location>
</feature>
<feature type="sequence conflict" description="In Ref. 5; AAA82880/AAA82879." evidence="44" ref="5">
    <original>V</original>
    <variation>E</variation>
    <location>
        <position position="146"/>
    </location>
</feature>
<feature type="helix" evidence="48">
    <location>
        <begin position="11"/>
        <end position="21"/>
    </location>
</feature>
<feature type="strand" evidence="48">
    <location>
        <begin position="26"/>
        <end position="31"/>
    </location>
</feature>
<feature type="strand" evidence="48">
    <location>
        <begin position="33"/>
        <end position="45"/>
    </location>
</feature>
<feature type="strand" evidence="48">
    <location>
        <begin position="48"/>
        <end position="55"/>
    </location>
</feature>
<feature type="strand" evidence="48">
    <location>
        <begin position="57"/>
        <end position="59"/>
    </location>
</feature>
<feature type="strand" evidence="48">
    <location>
        <begin position="61"/>
        <end position="63"/>
    </location>
</feature>
<feature type="strand" evidence="48">
    <location>
        <begin position="68"/>
        <end position="70"/>
    </location>
</feature>
<feature type="helix" evidence="48">
    <location>
        <begin position="72"/>
        <end position="80"/>
    </location>
</feature>
<feature type="strand" evidence="48">
    <location>
        <begin position="89"/>
        <end position="91"/>
    </location>
</feature>
<feature type="helix" evidence="48">
    <location>
        <begin position="105"/>
        <end position="107"/>
    </location>
</feature>
<feature type="strand" evidence="54">
    <location>
        <begin position="111"/>
        <end position="114"/>
    </location>
</feature>
<feature type="helix" evidence="54">
    <location>
        <begin position="117"/>
        <end position="126"/>
    </location>
</feature>
<feature type="strand" evidence="54">
    <location>
        <begin position="132"/>
        <end position="137"/>
    </location>
</feature>
<feature type="strand" evidence="54">
    <location>
        <begin position="139"/>
        <end position="141"/>
    </location>
</feature>
<feature type="strand" evidence="54">
    <location>
        <begin position="145"/>
        <end position="157"/>
    </location>
</feature>
<feature type="strand" evidence="54">
    <location>
        <begin position="162"/>
        <end position="172"/>
    </location>
</feature>
<feature type="strand" evidence="54">
    <location>
        <begin position="175"/>
        <end position="177"/>
    </location>
</feature>
<feature type="strand" evidence="54">
    <location>
        <begin position="184"/>
        <end position="186"/>
    </location>
</feature>
<feature type="helix" evidence="54">
    <location>
        <begin position="187"/>
        <end position="197"/>
    </location>
</feature>
<feature type="strand" evidence="54">
    <location>
        <begin position="199"/>
        <end position="202"/>
    </location>
</feature>
<feature type="strand" evidence="54">
    <location>
        <begin position="205"/>
        <end position="207"/>
    </location>
</feature>
<feature type="helix" evidence="48">
    <location>
        <begin position="221"/>
        <end position="223"/>
    </location>
</feature>
<feature type="strand" evidence="49">
    <location>
        <begin position="236"/>
        <end position="238"/>
    </location>
</feature>
<feature type="helix" evidence="50">
    <location>
        <begin position="244"/>
        <end position="256"/>
    </location>
</feature>
<feature type="turn" evidence="52">
    <location>
        <begin position="257"/>
        <end position="259"/>
    </location>
</feature>
<feature type="helix" evidence="50">
    <location>
        <begin position="263"/>
        <end position="266"/>
    </location>
</feature>
<feature type="helix" evidence="50">
    <location>
        <begin position="268"/>
        <end position="273"/>
    </location>
</feature>
<feature type="strand" evidence="47">
    <location>
        <begin position="275"/>
        <end position="278"/>
    </location>
</feature>
<feature type="turn" evidence="50">
    <location>
        <begin position="283"/>
        <end position="285"/>
    </location>
</feature>
<feature type="strand" evidence="50">
    <location>
        <begin position="286"/>
        <end position="288"/>
    </location>
</feature>
<feature type="strand" evidence="51">
    <location>
        <begin position="290"/>
        <end position="292"/>
    </location>
</feature>
<feature type="strand" evidence="49">
    <location>
        <begin position="294"/>
        <end position="296"/>
    </location>
</feature>
<feature type="turn" evidence="50">
    <location>
        <begin position="297"/>
        <end position="300"/>
    </location>
</feature>
<feature type="strand" evidence="50">
    <location>
        <begin position="301"/>
        <end position="307"/>
    </location>
</feature>
<feature type="strand" evidence="47">
    <location>
        <begin position="309"/>
        <end position="312"/>
    </location>
</feature>
<feature type="helix" evidence="46">
    <location>
        <begin position="314"/>
        <end position="316"/>
    </location>
</feature>
<feature type="strand" evidence="50">
    <location>
        <begin position="321"/>
        <end position="324"/>
    </location>
</feature>
<feature type="helix" evidence="50">
    <location>
        <begin position="329"/>
        <end position="331"/>
    </location>
</feature>
<feature type="helix" evidence="50">
    <location>
        <begin position="332"/>
        <end position="341"/>
    </location>
</feature>
<feature type="strand" evidence="50">
    <location>
        <begin position="346"/>
        <end position="349"/>
    </location>
</feature>
<feature type="strand" evidence="50">
    <location>
        <begin position="353"/>
        <end position="355"/>
    </location>
</feature>
<feature type="strand" evidence="46">
    <location>
        <begin position="356"/>
        <end position="358"/>
    </location>
</feature>
<feature type="strand" evidence="50">
    <location>
        <begin position="371"/>
        <end position="374"/>
    </location>
</feature>
<feature type="strand" evidence="50">
    <location>
        <begin position="377"/>
        <end position="386"/>
    </location>
</feature>
<feature type="strand" evidence="50">
    <location>
        <begin position="388"/>
        <end position="399"/>
    </location>
</feature>
<feature type="helix" evidence="48">
    <location>
        <begin position="400"/>
        <end position="402"/>
    </location>
</feature>
<feature type="strand" evidence="46">
    <location>
        <begin position="403"/>
        <end position="405"/>
    </location>
</feature>
<feature type="strand" evidence="50">
    <location>
        <begin position="407"/>
        <end position="414"/>
    </location>
</feature>
<feature type="strand" evidence="48">
    <location>
        <begin position="419"/>
        <end position="421"/>
    </location>
</feature>
<feature type="strand" evidence="50">
    <location>
        <begin position="424"/>
        <end position="426"/>
    </location>
</feature>
<feature type="helix" evidence="50">
    <location>
        <begin position="427"/>
        <end position="442"/>
    </location>
</feature>
<feature type="strand" evidence="53">
    <location>
        <begin position="443"/>
        <end position="445"/>
    </location>
</feature>
<feature type="strand" evidence="50">
    <location>
        <begin position="449"/>
        <end position="452"/>
    </location>
</feature>
<feature type="strand" evidence="50">
    <location>
        <begin position="454"/>
        <end position="457"/>
    </location>
</feature>
<feature type="helix" evidence="50">
    <location>
        <begin position="458"/>
        <end position="476"/>
    </location>
</feature>
<feature type="helix" evidence="50">
    <location>
        <begin position="484"/>
        <end position="492"/>
    </location>
</feature>
<feature type="helix" evidence="50">
    <location>
        <begin position="502"/>
        <end position="523"/>
    </location>
</feature>
<reference key="1">
    <citation type="journal article" date="1992" name="Mol. Cell. Biol.">
        <title>Protein tyrosine phosphatase containing SH2 domains: characterization, preferential expression in hematopoietic cells, and localization to human chromosome 12p12-p13.</title>
        <authorList>
            <person name="Yi T."/>
            <person name="Cleveland J.L."/>
            <person name="Ihle J.N."/>
        </authorList>
    </citation>
    <scope>NUCLEOTIDE SEQUENCE [MRNA] (ISOFORM 1)</scope>
    <scope>TISSUE SPECIFICITY</scope>
</reference>
<reference key="2">
    <citation type="journal article" date="1991" name="Nature">
        <title>A protein-tyrosine phosphatase with sequence similarity to the SH2 domain of the protein-tyrosine kinases.</title>
        <authorList>
            <person name="Shen S.H."/>
            <person name="Bastien L."/>
            <person name="Posner B.I."/>
            <person name="Chretien P."/>
        </authorList>
    </citation>
    <scope>NUCLEOTIDE SEQUENCE [MRNA] (ISOFORM 3)</scope>
    <source>
        <tissue>Mammary gland</tissue>
    </source>
</reference>
<reference key="3">
    <citation type="journal article" date="1991" name="Nature">
        <authorList>
            <person name="Shen S.H."/>
            <person name="Bastien L."/>
            <person name="Posner B.I."/>
            <person name="Chretien P."/>
        </authorList>
    </citation>
    <scope>ERRATUM OF PUBMED:1652101</scope>
    <scope>SEQUENCE REVISION</scope>
</reference>
<reference key="4">
    <citation type="journal article" date="1992" name="Proc. Natl. Acad. Sci. U.S.A.">
        <title>Isolation of a src homology 2-containing tyrosine phosphatase.</title>
        <authorList>
            <person name="Plutzky J."/>
            <person name="Neel B.G."/>
            <person name="Rosenberg R.D."/>
        </authorList>
    </citation>
    <scope>NUCLEOTIDE SEQUENCE [MRNA] (ISOFORM 1)</scope>
</reference>
<reference key="5">
    <citation type="journal article" date="1995" name="Genomics">
        <title>Human protein tyrosine phosphatase 1C (PTPN6) gene structure: alternate promoter usage and exon skipping generate multiple transcripts.</title>
        <authorList>
            <person name="Banville D."/>
            <person name="Stocco R."/>
            <person name="Shen S.H."/>
        </authorList>
    </citation>
    <scope>NUCLEOTIDE SEQUENCE [GENOMIC DNA] (ISOFORMS 1; 2 AND 3)</scope>
</reference>
<reference key="6">
    <citation type="journal article" date="1997" name="Genome Res.">
        <title>Large-scale sequencing in human chromosome 12p13: experimental and computational gene structure determination.</title>
        <authorList>
            <person name="Ansari-Lari M.A."/>
            <person name="Shen Y."/>
            <person name="Muzny D.M."/>
            <person name="Lee W."/>
            <person name="Gibbs R.A."/>
        </authorList>
    </citation>
    <scope>NUCLEOTIDE SEQUENCE [GENOMIC DNA]</scope>
</reference>
<reference key="7">
    <citation type="journal article" date="1999" name="J. Biol. Chem.">
        <title>Human 70-kDa SHP-1L differs from 68-kDa SHP-1 in its C-terminal structure and catalytic activity.</title>
        <authorList>
            <person name="Jin Y.J."/>
            <person name="Yu C.L."/>
            <person name="Burakoff S.J."/>
        </authorList>
    </citation>
    <scope>NUCLEOTIDE SEQUENCE [MRNA] (ISOFORM 4)</scope>
</reference>
<reference key="8">
    <citation type="submission" date="2002-02" db="EMBL/GenBank/DDBJ databases">
        <title>Gene silencing of SHP-1 gene in leukemias/lymphomas by aberrant methylation.</title>
        <authorList>
            <person name="Oka T."/>
            <person name="Ouchida M."/>
        </authorList>
    </citation>
    <scope>NUCLEOTIDE SEQUENCE [GENOMIC DNA] (ISOFORMS 1 AND 2)</scope>
</reference>
<reference key="9">
    <citation type="journal article" date="2004" name="Nat. Genet.">
        <title>Complete sequencing and characterization of 21,243 full-length human cDNAs.</title>
        <authorList>
            <person name="Ota T."/>
            <person name="Suzuki Y."/>
            <person name="Nishikawa T."/>
            <person name="Otsuki T."/>
            <person name="Sugiyama T."/>
            <person name="Irie R."/>
            <person name="Wakamatsu A."/>
            <person name="Hayashi K."/>
            <person name="Sato H."/>
            <person name="Nagai K."/>
            <person name="Kimura K."/>
            <person name="Makita H."/>
            <person name="Sekine M."/>
            <person name="Obayashi M."/>
            <person name="Nishi T."/>
            <person name="Shibahara T."/>
            <person name="Tanaka T."/>
            <person name="Ishii S."/>
            <person name="Yamamoto J."/>
            <person name="Saito K."/>
            <person name="Kawai Y."/>
            <person name="Isono Y."/>
            <person name="Nakamura Y."/>
            <person name="Nagahari K."/>
            <person name="Murakami K."/>
            <person name="Yasuda T."/>
            <person name="Iwayanagi T."/>
            <person name="Wagatsuma M."/>
            <person name="Shiratori A."/>
            <person name="Sudo H."/>
            <person name="Hosoiri T."/>
            <person name="Kaku Y."/>
            <person name="Kodaira H."/>
            <person name="Kondo H."/>
            <person name="Sugawara M."/>
            <person name="Takahashi M."/>
            <person name="Kanda K."/>
            <person name="Yokoi T."/>
            <person name="Furuya T."/>
            <person name="Kikkawa E."/>
            <person name="Omura Y."/>
            <person name="Abe K."/>
            <person name="Kamihara K."/>
            <person name="Katsuta N."/>
            <person name="Sato K."/>
            <person name="Tanikawa M."/>
            <person name="Yamazaki M."/>
            <person name="Ninomiya K."/>
            <person name="Ishibashi T."/>
            <person name="Yamashita H."/>
            <person name="Murakawa K."/>
            <person name="Fujimori K."/>
            <person name="Tanai H."/>
            <person name="Kimata M."/>
            <person name="Watanabe M."/>
            <person name="Hiraoka S."/>
            <person name="Chiba Y."/>
            <person name="Ishida S."/>
            <person name="Ono Y."/>
            <person name="Takiguchi S."/>
            <person name="Watanabe S."/>
            <person name="Yosida M."/>
            <person name="Hotuta T."/>
            <person name="Kusano J."/>
            <person name="Kanehori K."/>
            <person name="Takahashi-Fujii A."/>
            <person name="Hara H."/>
            <person name="Tanase T.-O."/>
            <person name="Nomura Y."/>
            <person name="Togiya S."/>
            <person name="Komai F."/>
            <person name="Hara R."/>
            <person name="Takeuchi K."/>
            <person name="Arita M."/>
            <person name="Imose N."/>
            <person name="Musashino K."/>
            <person name="Yuuki H."/>
            <person name="Oshima A."/>
            <person name="Sasaki N."/>
            <person name="Aotsuka S."/>
            <person name="Yoshikawa Y."/>
            <person name="Matsunawa H."/>
            <person name="Ichihara T."/>
            <person name="Shiohata N."/>
            <person name="Sano S."/>
            <person name="Moriya S."/>
            <person name="Momiyama H."/>
            <person name="Satoh N."/>
            <person name="Takami S."/>
            <person name="Terashima Y."/>
            <person name="Suzuki O."/>
            <person name="Nakagawa S."/>
            <person name="Senoh A."/>
            <person name="Mizoguchi H."/>
            <person name="Goto Y."/>
            <person name="Shimizu F."/>
            <person name="Wakebe H."/>
            <person name="Hishigaki H."/>
            <person name="Watanabe T."/>
            <person name="Sugiyama A."/>
            <person name="Takemoto M."/>
            <person name="Kawakami B."/>
            <person name="Yamazaki M."/>
            <person name="Watanabe K."/>
            <person name="Kumagai A."/>
            <person name="Itakura S."/>
            <person name="Fukuzumi Y."/>
            <person name="Fujimori Y."/>
            <person name="Komiyama M."/>
            <person name="Tashiro H."/>
            <person name="Tanigami A."/>
            <person name="Fujiwara T."/>
            <person name="Ono T."/>
            <person name="Yamada K."/>
            <person name="Fujii Y."/>
            <person name="Ozaki K."/>
            <person name="Hirao M."/>
            <person name="Ohmori Y."/>
            <person name="Kawabata A."/>
            <person name="Hikiji T."/>
            <person name="Kobatake N."/>
            <person name="Inagaki H."/>
            <person name="Ikema Y."/>
            <person name="Okamoto S."/>
            <person name="Okitani R."/>
            <person name="Kawakami T."/>
            <person name="Noguchi S."/>
            <person name="Itoh T."/>
            <person name="Shigeta K."/>
            <person name="Senba T."/>
            <person name="Matsumura K."/>
            <person name="Nakajima Y."/>
            <person name="Mizuno T."/>
            <person name="Morinaga M."/>
            <person name="Sasaki M."/>
            <person name="Togashi T."/>
            <person name="Oyama M."/>
            <person name="Hata H."/>
            <person name="Watanabe M."/>
            <person name="Komatsu T."/>
            <person name="Mizushima-Sugano J."/>
            <person name="Satoh T."/>
            <person name="Shirai Y."/>
            <person name="Takahashi Y."/>
            <person name="Nakagawa K."/>
            <person name="Okumura K."/>
            <person name="Nagase T."/>
            <person name="Nomura N."/>
            <person name="Kikuchi H."/>
            <person name="Masuho Y."/>
            <person name="Yamashita R."/>
            <person name="Nakai K."/>
            <person name="Yada T."/>
            <person name="Nakamura Y."/>
            <person name="Ohara O."/>
            <person name="Isogai T."/>
            <person name="Sugano S."/>
        </authorList>
    </citation>
    <scope>NUCLEOTIDE SEQUENCE [LARGE SCALE MRNA] (ISOFORM 1)</scope>
    <source>
        <tissue>Umbilical cord blood</tissue>
    </source>
</reference>
<reference key="10">
    <citation type="journal article" date="2006" name="Nature">
        <title>The finished DNA sequence of human chromosome 12.</title>
        <authorList>
            <person name="Scherer S.E."/>
            <person name="Muzny D.M."/>
            <person name="Buhay C.J."/>
            <person name="Chen R."/>
            <person name="Cree A."/>
            <person name="Ding Y."/>
            <person name="Dugan-Rocha S."/>
            <person name="Gill R."/>
            <person name="Gunaratne P."/>
            <person name="Harris R.A."/>
            <person name="Hawes A.C."/>
            <person name="Hernandez J."/>
            <person name="Hodgson A.V."/>
            <person name="Hume J."/>
            <person name="Jackson A."/>
            <person name="Khan Z.M."/>
            <person name="Kovar-Smith C."/>
            <person name="Lewis L.R."/>
            <person name="Lozado R.J."/>
            <person name="Metzker M.L."/>
            <person name="Milosavljevic A."/>
            <person name="Miner G.R."/>
            <person name="Montgomery K.T."/>
            <person name="Morgan M.B."/>
            <person name="Nazareth L.V."/>
            <person name="Scott G."/>
            <person name="Sodergren E."/>
            <person name="Song X.-Z."/>
            <person name="Steffen D."/>
            <person name="Lovering R.C."/>
            <person name="Wheeler D.A."/>
            <person name="Worley K.C."/>
            <person name="Yuan Y."/>
            <person name="Zhang Z."/>
            <person name="Adams C.Q."/>
            <person name="Ansari-Lari M.A."/>
            <person name="Ayele M."/>
            <person name="Brown M.J."/>
            <person name="Chen G."/>
            <person name="Chen Z."/>
            <person name="Clerc-Blankenburg K.P."/>
            <person name="Davis C."/>
            <person name="Delgado O."/>
            <person name="Dinh H.H."/>
            <person name="Draper H."/>
            <person name="Gonzalez-Garay M.L."/>
            <person name="Havlak P."/>
            <person name="Jackson L.R."/>
            <person name="Jacob L.S."/>
            <person name="Kelly S.H."/>
            <person name="Li L."/>
            <person name="Li Z."/>
            <person name="Liu J."/>
            <person name="Liu W."/>
            <person name="Lu J."/>
            <person name="Maheshwari M."/>
            <person name="Nguyen B.-V."/>
            <person name="Okwuonu G.O."/>
            <person name="Pasternak S."/>
            <person name="Perez L.M."/>
            <person name="Plopper F.J.H."/>
            <person name="Santibanez J."/>
            <person name="Shen H."/>
            <person name="Tabor P.E."/>
            <person name="Verduzco D."/>
            <person name="Waldron L."/>
            <person name="Wang Q."/>
            <person name="Williams G.A."/>
            <person name="Zhang J."/>
            <person name="Zhou J."/>
            <person name="Allen C.C."/>
            <person name="Amin A.G."/>
            <person name="Anyalebechi V."/>
            <person name="Bailey M."/>
            <person name="Barbaria J.A."/>
            <person name="Bimage K.E."/>
            <person name="Bryant N.P."/>
            <person name="Burch P.E."/>
            <person name="Burkett C.E."/>
            <person name="Burrell K.L."/>
            <person name="Calderon E."/>
            <person name="Cardenas V."/>
            <person name="Carter K."/>
            <person name="Casias K."/>
            <person name="Cavazos I."/>
            <person name="Cavazos S.R."/>
            <person name="Ceasar H."/>
            <person name="Chacko J."/>
            <person name="Chan S.N."/>
            <person name="Chavez D."/>
            <person name="Christopoulos C."/>
            <person name="Chu J."/>
            <person name="Cockrell R."/>
            <person name="Cox C.D."/>
            <person name="Dang M."/>
            <person name="Dathorne S.R."/>
            <person name="David R."/>
            <person name="Davis C.M."/>
            <person name="Davy-Carroll L."/>
            <person name="Deshazo D.R."/>
            <person name="Donlin J.E."/>
            <person name="D'Souza L."/>
            <person name="Eaves K.A."/>
            <person name="Egan A."/>
            <person name="Emery-Cohen A.J."/>
            <person name="Escotto M."/>
            <person name="Flagg N."/>
            <person name="Forbes L.D."/>
            <person name="Gabisi A.M."/>
            <person name="Garza M."/>
            <person name="Hamilton C."/>
            <person name="Henderson N."/>
            <person name="Hernandez O."/>
            <person name="Hines S."/>
            <person name="Hogues M.E."/>
            <person name="Huang M."/>
            <person name="Idlebird D.G."/>
            <person name="Johnson R."/>
            <person name="Jolivet A."/>
            <person name="Jones S."/>
            <person name="Kagan R."/>
            <person name="King L.M."/>
            <person name="Leal B."/>
            <person name="Lebow H."/>
            <person name="Lee S."/>
            <person name="LeVan J.M."/>
            <person name="Lewis L.C."/>
            <person name="London P."/>
            <person name="Lorensuhewa L.M."/>
            <person name="Loulseged H."/>
            <person name="Lovett D.A."/>
            <person name="Lucier A."/>
            <person name="Lucier R.L."/>
            <person name="Ma J."/>
            <person name="Madu R.C."/>
            <person name="Mapua P."/>
            <person name="Martindale A.D."/>
            <person name="Martinez E."/>
            <person name="Massey E."/>
            <person name="Mawhiney S."/>
            <person name="Meador M.G."/>
            <person name="Mendez S."/>
            <person name="Mercado C."/>
            <person name="Mercado I.C."/>
            <person name="Merritt C.E."/>
            <person name="Miner Z.L."/>
            <person name="Minja E."/>
            <person name="Mitchell T."/>
            <person name="Mohabbat F."/>
            <person name="Mohabbat K."/>
            <person name="Montgomery B."/>
            <person name="Moore N."/>
            <person name="Morris S."/>
            <person name="Munidasa M."/>
            <person name="Ngo R.N."/>
            <person name="Nguyen N.B."/>
            <person name="Nickerson E."/>
            <person name="Nwaokelemeh O.O."/>
            <person name="Nwokenkwo S."/>
            <person name="Obregon M."/>
            <person name="Oguh M."/>
            <person name="Oragunye N."/>
            <person name="Oviedo R.J."/>
            <person name="Parish B.J."/>
            <person name="Parker D.N."/>
            <person name="Parrish J."/>
            <person name="Parks K.L."/>
            <person name="Paul H.A."/>
            <person name="Payton B.A."/>
            <person name="Perez A."/>
            <person name="Perrin W."/>
            <person name="Pickens A."/>
            <person name="Primus E.L."/>
            <person name="Pu L.-L."/>
            <person name="Puazo M."/>
            <person name="Quiles M.M."/>
            <person name="Quiroz J.B."/>
            <person name="Rabata D."/>
            <person name="Reeves K."/>
            <person name="Ruiz S.J."/>
            <person name="Shao H."/>
            <person name="Sisson I."/>
            <person name="Sonaike T."/>
            <person name="Sorelle R.P."/>
            <person name="Sutton A.E."/>
            <person name="Svatek A.F."/>
            <person name="Svetz L.A."/>
            <person name="Tamerisa K.S."/>
            <person name="Taylor T.R."/>
            <person name="Teague B."/>
            <person name="Thomas N."/>
            <person name="Thorn R.D."/>
            <person name="Trejos Z.Y."/>
            <person name="Trevino B.K."/>
            <person name="Ukegbu O.N."/>
            <person name="Urban J.B."/>
            <person name="Vasquez L.I."/>
            <person name="Vera V.A."/>
            <person name="Villasana D.M."/>
            <person name="Wang L."/>
            <person name="Ward-Moore S."/>
            <person name="Warren J.T."/>
            <person name="Wei X."/>
            <person name="White F."/>
            <person name="Williamson A.L."/>
            <person name="Wleczyk R."/>
            <person name="Wooden H.S."/>
            <person name="Wooden S.H."/>
            <person name="Yen J."/>
            <person name="Yoon L."/>
            <person name="Yoon V."/>
            <person name="Zorrilla S.E."/>
            <person name="Nelson D."/>
            <person name="Kucherlapati R."/>
            <person name="Weinstock G."/>
            <person name="Gibbs R.A."/>
        </authorList>
    </citation>
    <scope>NUCLEOTIDE SEQUENCE [LARGE SCALE GENOMIC DNA]</scope>
</reference>
<reference key="11">
    <citation type="submission" date="2005-09" db="EMBL/GenBank/DDBJ databases">
        <authorList>
            <person name="Mural R.J."/>
            <person name="Istrail S."/>
            <person name="Sutton G.G."/>
            <person name="Florea L."/>
            <person name="Halpern A.L."/>
            <person name="Mobarry C.M."/>
            <person name="Lippert R."/>
            <person name="Walenz B."/>
            <person name="Shatkay H."/>
            <person name="Dew I."/>
            <person name="Miller J.R."/>
            <person name="Flanigan M.J."/>
            <person name="Edwards N.J."/>
            <person name="Bolanos R."/>
            <person name="Fasulo D."/>
            <person name="Halldorsson B.V."/>
            <person name="Hannenhalli S."/>
            <person name="Turner R."/>
            <person name="Yooseph S."/>
            <person name="Lu F."/>
            <person name="Nusskern D.R."/>
            <person name="Shue B.C."/>
            <person name="Zheng X.H."/>
            <person name="Zhong F."/>
            <person name="Delcher A.L."/>
            <person name="Huson D.H."/>
            <person name="Kravitz S.A."/>
            <person name="Mouchard L."/>
            <person name="Reinert K."/>
            <person name="Remington K.A."/>
            <person name="Clark A.G."/>
            <person name="Waterman M.S."/>
            <person name="Eichler E.E."/>
            <person name="Adams M.D."/>
            <person name="Hunkapiller M.W."/>
            <person name="Myers E.W."/>
            <person name="Venter J.C."/>
        </authorList>
    </citation>
    <scope>NUCLEOTIDE SEQUENCE [LARGE SCALE GENOMIC DNA]</scope>
</reference>
<reference key="12">
    <citation type="journal article" date="2004" name="Genome Res.">
        <title>The status, quality, and expansion of the NIH full-length cDNA project: the Mammalian Gene Collection (MGC).</title>
        <authorList>
            <consortium name="The MGC Project Team"/>
        </authorList>
    </citation>
    <scope>NUCLEOTIDE SEQUENCE [LARGE SCALE MRNA] (ISOFORM 2)</scope>
    <source>
        <tissue>Placenta</tissue>
    </source>
</reference>
<reference key="13">
    <citation type="journal article" date="1995" name="EMBO J.">
        <title>Tyrosine phosphorylation of an SH2-containing protein tyrosine phosphatase is coupled to platelet thrombin receptor via a pertussis toxin-sensitive heterotrimeric G-protein.</title>
        <authorList>
            <person name="Li R.Y."/>
            <person name="Gaits F."/>
            <person name="Ragab A."/>
            <person name="Ragab-Thomas J.M.F."/>
            <person name="Chap H."/>
        </authorList>
    </citation>
    <scope>PHOSPHORYLATION</scope>
</reference>
<reference key="14">
    <citation type="journal article" date="1997" name="Immunity">
        <title>A novel immunoglobulin superfamily receptor for cellular and viral MHC class I molecules.</title>
        <authorList>
            <person name="Cosman D."/>
            <person name="Fanger N."/>
            <person name="Borges L."/>
            <person name="Kubin M."/>
            <person name="Chin W."/>
            <person name="Peterson L."/>
            <person name="Hsu M.-L."/>
        </authorList>
    </citation>
    <scope>INTERACTION WITH LILRB1</scope>
</reference>
<reference key="15">
    <citation type="journal article" date="1997" name="J. Exp. Med.">
        <title>A novel inhibitory receptor (ILT3) expressed on monocytes, macrophages, and dendritic cells involved in antigen processing.</title>
        <authorList>
            <person name="Cella M."/>
            <person name="Doehring C."/>
            <person name="Samaridis J."/>
            <person name="Dessing M."/>
            <person name="Brockhaus M."/>
            <person name="Lanzavecchia A."/>
            <person name="Colonna M."/>
        </authorList>
    </citation>
    <scope>INTERACTION WITH LILRB4</scope>
</reference>
<reference key="16">
    <citation type="journal article" date="1997" name="J. Biol. Chem.">
        <title>Interleukin-4 (IL-4) induces phosphatidylinositol 3-kinase (p85) dephosphorylation. Implications for the role of SHP-1 in the IL-4-induced signals in human B cells.</title>
        <authorList>
            <person name="Imani F."/>
            <person name="Rager K.J."/>
            <person name="Catipovic B."/>
            <person name="Marsh D.G."/>
        </authorList>
    </citation>
    <scope>FUNCTION</scope>
    <scope>SUBCELLULAR LOCATION</scope>
</reference>
<reference key="17">
    <citation type="journal article" date="1998" name="Eur. J. Immunol.">
        <title>The MHC class I binding proteins LIR-1 and LIR-2 inhibit Fc receptor-mediated signaling in monocytes.</title>
        <authorList>
            <person name="Fanger N.A."/>
            <person name="Cosman D."/>
            <person name="Peterson L."/>
            <person name="Braddy S.C."/>
            <person name="Maliszewski C.R."/>
            <person name="Borges L."/>
        </authorList>
    </citation>
    <scope>INTERACTION WITH LILRB2</scope>
</reference>
<reference key="18">
    <citation type="journal article" date="1998" name="J. Biol. Chem.">
        <title>Phosphotyrosine 1173 mediates binding of the protein-tyrosine phosphatase SHP-1 to the epidermal growth factor receptor and attenuation of receptor signaling.</title>
        <authorList>
            <person name="Keilhack H."/>
            <person name="Tenev T."/>
            <person name="Nyakatura E."/>
            <person name="Godovac-Zimmermann J."/>
            <person name="Nielsen L."/>
            <person name="Seedorf K."/>
            <person name="Boehmer F.D."/>
        </authorList>
    </citation>
    <scope>FUNCTION</scope>
</reference>
<reference key="19">
    <citation type="journal article" date="1998" name="J. Biol. Chem.">
        <title>High expression of inhibitory receptor SHPS-1 and its association with protein tyrosine phosphatase SHP-1 in macrophages.</title>
        <authorList>
            <person name="Veillette A."/>
            <person name="Thibaudeau E."/>
            <person name="Latour S."/>
        </authorList>
    </citation>
    <scope>INTERACTION WITH SIRPA</scope>
</reference>
<reference key="20">
    <citation type="journal article" date="1999" name="J. Biol. Chem.">
        <title>Functional interaction between SHPTP1 and the Lyn tyrosine kinase in the apoptotic response to DNA damage.</title>
        <authorList>
            <person name="Yoshida K."/>
            <person name="Kharbanda S."/>
            <person name="Kufe D."/>
        </authorList>
    </citation>
    <scope>PHOSPHORYLATION AT TYR-564</scope>
    <scope>FUNCTION</scope>
    <scope>CATALYTIC ACTIVITY</scope>
    <scope>MUTAGENESIS OF TYR-564</scope>
</reference>
<reference key="21">
    <citation type="journal article" date="2001" name="Biochem. Biophys. Res. Commun.">
        <title>Molecular cloning and characterization of SPAP1, an inhibitory receptor.</title>
        <authorList>
            <person name="Xu M.-J."/>
            <person name="Zhao R."/>
            <person name="Zhao Z.J."/>
        </authorList>
    </citation>
    <scope>INTERACTION WITH FCRL2 AND FCRL3</scope>
</reference>
<reference key="22">
    <citation type="journal article" date="2001" name="Clin. Immunol.">
        <title>Distinct interactions of the X-linked lymphoproliferative syndrome gene product SAP with cytoplasmic domains of members of the CD2 receptor family.</title>
        <authorList>
            <person name="Lewis J."/>
            <person name="Eiben L.J."/>
            <person name="Nelson D.L."/>
            <person name="Cohen J.I."/>
            <person name="Nichols K.E."/>
            <person name="Ochs H.D."/>
            <person name="Notarangelo L.D."/>
            <person name="Duckett C.S."/>
        </authorList>
    </citation>
    <scope>INTERACTION WITH CD84</scope>
</reference>
<reference key="23">
    <citation type="journal article" date="2001" name="J. Cell Biol.">
        <title>Negative regulation of Ros receptor tyrosine kinase signaling. An epithelial function of the SH2 domain protein tyrosine phosphatase SHP-1.</title>
        <authorList>
            <person name="Keilhack H."/>
            <person name="Mueller M."/>
            <person name="Boehmer S.A."/>
            <person name="Frank C."/>
            <person name="Weidner K.M."/>
            <person name="Birchmeier W."/>
            <person name="Ligensa T."/>
            <person name="Berndt A."/>
            <person name="Kosmehl H."/>
            <person name="Guenther B."/>
            <person name="Mueller T."/>
            <person name="Birchmeier C."/>
            <person name="Boehmer F.D."/>
        </authorList>
    </citation>
    <scope>FUNCTION IN ROS1 DEPHOSPHORYLATION</scope>
    <scope>INTERACTION WITH ROS1</scope>
</reference>
<reference key="24">
    <citation type="journal article" date="2002" name="J. Immunol.">
        <title>Mutational analysis of immunoreceptor tyrosine-based inhibition motifs of the Ig-like transcript 2 (CD85j) leukocyte receptor.</title>
        <authorList>
            <person name="Bellon T."/>
            <person name="Kitzig F."/>
            <person name="Sayos J."/>
            <person name="Lopez-Botet M."/>
        </authorList>
    </citation>
    <scope>FUNCTION</scope>
    <scope>MUTAGENESIS OF ASP-419</scope>
</reference>
<reference key="25">
    <citation type="journal article" date="2003" name="Nature">
        <title>Proteomic characterization of the human centrosome by protein correlation profiling.</title>
        <authorList>
            <person name="Andersen J.S."/>
            <person name="Wilkinson C.J."/>
            <person name="Mayor T."/>
            <person name="Mortensen P."/>
            <person name="Nigg E.A."/>
            <person name="Mann M."/>
        </authorList>
    </citation>
    <scope>IDENTIFICATION BY MASS SPECTROMETRY</scope>
    <source>
        <tissue>Lymphoblast</tissue>
    </source>
</reference>
<reference key="26">
    <citation type="journal article" date="2003" name="Proc. Natl. Acad. Sci. U.S.A.">
        <title>The inhibitory potential of Fc receptor homolog 4 on memory B cells.</title>
        <authorList>
            <person name="Ehrhardt G.R.A."/>
            <person name="Davis R.S."/>
            <person name="Hsu J.T."/>
            <person name="Leu C.-M."/>
            <person name="Ehrhardt A."/>
            <person name="Cooper M.D."/>
        </authorList>
    </citation>
    <scope>INTERACTION WITH FCRL4</scope>
</reference>
<reference key="27">
    <citation type="journal article" date="2004" name="Biochem. Biophys. Res. Commun.">
        <title>IgSF13, a novel human inhibitory receptor of the immunoglobulin superfamily, is preferentially expressed in dendritic cells and monocytes.</title>
        <authorList>
            <person name="Sui L."/>
            <person name="Li N."/>
            <person name="Liu Q."/>
            <person name="Zhang W."/>
            <person name="Wan T."/>
            <person name="Wang B."/>
            <person name="Luo K."/>
            <person name="Sun H."/>
            <person name="Cao X."/>
        </authorList>
    </citation>
    <scope>INTERACTION WITH CD300LF</scope>
</reference>
<reference key="28">
    <citation type="journal article" date="2004" name="Cell. Mol. Life Sci.">
        <title>Signal transduction via the stem cell factor receptor/c-Kit.</title>
        <authorList>
            <person name="Ronnstrand L."/>
        </authorList>
    </citation>
    <scope>REVIEW ON ROLE IN KIT SIGNALING</scope>
</reference>
<reference key="29">
    <citation type="journal article" date="2004" name="J. Biol. Chem.">
        <title>Identification and characterization of a novel human myeloid inhibitory C-type lectin-like receptor (MICL) that is predominantly expressed on granulocytes and monocytes.</title>
        <authorList>
            <person name="Marshall A.S.J."/>
            <person name="Willment J.A."/>
            <person name="Lin H.-H."/>
            <person name="Williams D.L."/>
            <person name="Gordon S."/>
            <person name="Brown G.D."/>
        </authorList>
    </citation>
    <scope>FUNCTION</scope>
</reference>
<reference key="30">
    <citation type="journal article" date="2005" name="Biochem. Biophys. Res. Commun.">
        <title>Signaling by Kit protein-tyrosine kinase--the stem cell factor receptor.</title>
        <authorList>
            <person name="Roskoski R. Jr."/>
        </authorList>
    </citation>
    <scope>REVIEW ON ROLE IN KIT SIGNALING</scope>
</reference>
<reference key="31">
    <citation type="journal article" date="2006" name="J. Immunol.">
        <title>Recombinant Ig-like transcript 3-Fc modulates T cell responses via induction of Th anergy and differentiation of CD8+ T suppressor cells.</title>
        <authorList>
            <person name="Kim-Schulze S."/>
            <person name="Scotto L."/>
            <person name="Vlad G."/>
            <person name="Piazza F."/>
            <person name="Lin H."/>
            <person name="Liu Z."/>
            <person name="Cortesini R."/>
            <person name="Suciu-Foca N."/>
        </authorList>
    </citation>
    <scope>INTERACTION WITH LILRB4</scope>
</reference>
<reference key="32">
    <citation type="journal article" date="2007" name="J. Biol. Chem.">
        <title>Identification of CLEC12B, an inhibitory receptor on myeloid cells.</title>
        <authorList>
            <person name="Hoffmann S.C."/>
            <person name="Schellack C."/>
            <person name="Textor S."/>
            <person name="Konold S."/>
            <person name="Schmitz D."/>
            <person name="Cerwenka A."/>
            <person name="Pflanz S."/>
            <person name="Watzl C."/>
        </authorList>
    </citation>
    <scope>INTERACTION WITH CLEC12B</scope>
</reference>
<reference key="33">
    <citation type="journal article" date="2008" name="Nat. Immunol.">
        <title>An essential function for beta-arrestin 2 in the inhibitory signaling of natural killer cells.</title>
        <authorList>
            <person name="Yu M.-C."/>
            <person name="Su L.-L."/>
            <person name="Zou L."/>
            <person name="Liu Y."/>
            <person name="Wu N."/>
            <person name="Kong L."/>
            <person name="Zhuang Z.-H."/>
            <person name="Sun L."/>
            <person name="Liu H.P."/>
            <person name="Hu J.-H."/>
            <person name="Li D."/>
            <person name="Strominger J.L."/>
            <person name="Zang J.-W."/>
            <person name="Pei G."/>
            <person name="Ge B.-X."/>
        </authorList>
    </citation>
    <scope>INTERACTION WITH KIR2DL1</scope>
</reference>
<reference key="34">
    <citation type="journal article" date="2009" name="Cell. Signal.">
        <title>The nuclear localization of 3'-phosphoinositide-dependent kinase-1 is dependent on its association with the protein tyrosine phosphatase SHP-1.</title>
        <authorList>
            <person name="Sephton C.F."/>
            <person name="Zhang D."/>
            <person name="Lehmann T.M."/>
            <person name="Pennington P.R."/>
            <person name="Scheid M.P."/>
            <person name="Mousseau D.D."/>
        </authorList>
    </citation>
    <scope>SUBCELLULAR LOCATION</scope>
    <scope>INTERACTION WITH PDPK1</scope>
</reference>
<reference key="35">
    <citation type="journal article" date="2009" name="J. Immunol.">
        <title>FCRL3, an autoimmune susceptibility gene, has inhibitory potential on B-cell receptor-mediated signaling.</title>
        <authorList>
            <person name="Kochi Y."/>
            <person name="Myouzen K."/>
            <person name="Yamada R."/>
            <person name="Suzuki A."/>
            <person name="Kurosaki T."/>
            <person name="Nakamura Y."/>
            <person name="Yamamoto K."/>
        </authorList>
    </citation>
    <scope>INTERACTION WITH FCRL3</scope>
</reference>
<reference key="36">
    <citation type="journal article" date="2009" name="Sci. Signal.">
        <title>Quantitative phosphoproteomic analysis of T cell receptor signaling reveals system-wide modulation of protein-protein interactions.</title>
        <authorList>
            <person name="Mayya V."/>
            <person name="Lundgren D.H."/>
            <person name="Hwang S.-I."/>
            <person name="Rezaul K."/>
            <person name="Wu L."/>
            <person name="Eng J.K."/>
            <person name="Rodionov V."/>
            <person name="Han D.K."/>
        </authorList>
    </citation>
    <scope>PHOSPHORYLATION [LARGE SCALE ANALYSIS] AT TYR-64</scope>
    <scope>IDENTIFICATION BY MASS SPECTROMETRY [LARGE SCALE ANALYSIS]</scope>
    <source>
        <tissue>Leukemic T-cell</tissue>
    </source>
</reference>
<reference key="37">
    <citation type="journal article" date="2010" name="Proc. Natl. Acad. Sci. U.S.A.">
        <title>Contribution of SHP-1 protein tyrosine phosphatase to osmotic regulation of the transcription factor TonEBP/OREBP.</title>
        <authorList>
            <person name="Zhou X."/>
            <person name="Gallazzini M."/>
            <person name="Burg M.B."/>
            <person name="Ferraris J.D."/>
        </authorList>
    </citation>
    <scope>FUNCTION</scope>
    <scope>SUBCELLULAR LOCATION</scope>
    <scope>CATALYTIC ACTIVITY</scope>
    <scope>MUTAGENESIS OF SER-591</scope>
</reference>
<reference key="38">
    <citation type="journal article" date="2011" name="BMC Syst. Biol.">
        <title>Initial characterization of the human central proteome.</title>
        <authorList>
            <person name="Burkard T.R."/>
            <person name="Planyavsky M."/>
            <person name="Kaupe I."/>
            <person name="Breitwieser F.P."/>
            <person name="Buerckstuemmer T."/>
            <person name="Bennett K.L."/>
            <person name="Superti-Furga G."/>
            <person name="Colinge J."/>
        </authorList>
    </citation>
    <scope>IDENTIFICATION BY MASS SPECTROMETRY [LARGE SCALE ANALYSIS]</scope>
</reference>
<reference key="39">
    <citation type="journal article" date="2011" name="Cell. Signal.">
        <title>Compartmentalized CDK2 is connected with SHP-1 and beta-catenin and regulates insulin internalization.</title>
        <authorList>
            <person name="Fiset A."/>
            <person name="Xu E."/>
            <person name="Bergeron S."/>
            <person name="Marette A."/>
            <person name="Pelletier G."/>
            <person name="Siminovitch K.A."/>
            <person name="Olivier M."/>
            <person name="Beauchemin N."/>
            <person name="Faure R.L."/>
        </authorList>
    </citation>
    <scope>SUBCELLULAR LOCATION</scope>
    <scope>INTERACTION WITH CDK2</scope>
</reference>
<reference key="40">
    <citation type="journal article" date="2011" name="Immunol. Lett.">
        <title>FCRL6 receptor: expression and associated proteins.</title>
        <authorList>
            <person name="Kulemzin S.V."/>
            <person name="Zamoshnikova A.Y."/>
            <person name="Yurchenko M.Y."/>
            <person name="Vitak N.Y."/>
            <person name="Najakshin A.M."/>
            <person name="Fayngerts S.A."/>
            <person name="Chikaev N.A."/>
            <person name="Reshetnikova E.S."/>
            <person name="Kashirina N.M."/>
            <person name="Peclo M.M."/>
            <person name="Rutkevich P.N."/>
            <person name="Shevelev A.Y."/>
            <person name="Yanushevskaya E.V."/>
            <person name="Baranov K.O."/>
            <person name="Mamonkin M."/>
            <person name="Vlasik T.N."/>
            <person name="Sidorenko S.P."/>
            <person name="Taranin A.V."/>
            <person name="Mechetina L.V."/>
        </authorList>
    </citation>
    <scope>INTERACTION WITH FCRL6</scope>
</reference>
<reference key="41">
    <citation type="journal article" date="2011" name="Nat. Cell Biol.">
        <title>Crosstalk between Arg 1175 methylation and Tyr 1173 phosphorylation negatively modulates EGFR-mediated ERK activation.</title>
        <authorList>
            <person name="Hsu J.M."/>
            <person name="Chen C.T."/>
            <person name="Chou C.K."/>
            <person name="Kuo H.P."/>
            <person name="Li L.Y."/>
            <person name="Lin C.Y."/>
            <person name="Lee H.J."/>
            <person name="Wang Y.N."/>
            <person name="Liu M."/>
            <person name="Liao H.W."/>
            <person name="Shi B."/>
            <person name="Lai C.C."/>
            <person name="Bedford M.T."/>
            <person name="Tsai C.H."/>
            <person name="Hung M.C."/>
        </authorList>
    </citation>
    <scope>INTERACTION WITH EGFR</scope>
    <scope>FUNCTION</scope>
</reference>
<reference key="42">
    <citation type="journal article" date="2012" name="Sci. Signal.">
        <title>Mice lacking the ITIM-containing receptor G6b-B exhibit macrothrombocytopenia and aberrant platelet function.</title>
        <authorList>
            <person name="Mazharian A."/>
            <person name="Wang Y.J."/>
            <person name="Mori J."/>
            <person name="Bem D."/>
            <person name="Finney B."/>
            <person name="Heising S."/>
            <person name="Gissen P."/>
            <person name="White J.G."/>
            <person name="Berndt M.C."/>
            <person name="Gardiner E.E."/>
            <person name="Nieswandt B."/>
            <person name="Douglas M.R."/>
            <person name="Campbell R.D."/>
            <person name="Watson S.P."/>
            <person name="Senis Y.A."/>
        </authorList>
    </citation>
    <scope>INTERACTION WITH MPIG6B</scope>
</reference>
<reference key="43">
    <citation type="journal article" date="2013" name="J. Proteome Res.">
        <title>Toward a comprehensive characterization of a human cancer cell phosphoproteome.</title>
        <authorList>
            <person name="Zhou H."/>
            <person name="Di Palma S."/>
            <person name="Preisinger C."/>
            <person name="Peng M."/>
            <person name="Polat A.N."/>
            <person name="Heck A.J."/>
            <person name="Mohammed S."/>
        </authorList>
    </citation>
    <scope>IDENTIFICATION BY MASS SPECTROMETRY [LARGE SCALE ANALYSIS]</scope>
    <source>
        <tissue>Cervix carcinoma</tissue>
    </source>
</reference>
<reference key="44">
    <citation type="journal article" date="2015" name="Proteomics">
        <title>N-terminome analysis of the human mitochondrial proteome.</title>
        <authorList>
            <person name="Vaca Jacome A.S."/>
            <person name="Rabilloud T."/>
            <person name="Schaeffer-Reiss C."/>
            <person name="Rompais M."/>
            <person name="Ayoub D."/>
            <person name="Lane L."/>
            <person name="Bairoch A."/>
            <person name="Van Dorsselaer A."/>
            <person name="Carapito C."/>
        </authorList>
    </citation>
    <scope>IDENTIFICATION BY MASS SPECTROMETRY [LARGE SCALE ANALYSIS]</scope>
</reference>
<reference key="45">
    <citation type="journal article" date="2018" name="Nat. Immunol.">
        <title>The E3 ligases Itch and WWP2 cooperate to limit TH2 differentiation by enhancing signaling through the TCR.</title>
        <authorList>
            <person name="Aki D."/>
            <person name="Li H."/>
            <person name="Zhang W."/>
            <person name="Zheng M."/>
            <person name="Elly C."/>
            <person name="Lee J.H."/>
            <person name="Zou W."/>
            <person name="Liu Y.C."/>
        </authorList>
    </citation>
    <scope>FUNCTION</scope>
    <scope>UBIQUITINATION AT LYS-308</scope>
    <scope>MUTAGENESIS OF LYS-308</scope>
    <scope>CATALYTIC ACTIVITY</scope>
</reference>
<reference key="46">
    <citation type="journal article" date="2022" name="Cell. Mol. Immunol.">
        <title>HIV-1 Vif suppresses antiviral immunity by targeting STING.</title>
        <authorList>
            <person name="Wang Y."/>
            <person name="Qian G."/>
            <person name="Zhu L."/>
            <person name="Zhao Z."/>
            <person name="Liu Y."/>
            <person name="Han W."/>
            <person name="Zhang X."/>
            <person name="Zhang Y."/>
            <person name="Xiong T."/>
            <person name="Zeng H."/>
            <person name="Yu X."/>
            <person name="Yu X."/>
            <person name="Zhang X."/>
            <person name="Xu J."/>
            <person name="Zou Q."/>
            <person name="Yan D."/>
        </authorList>
    </citation>
    <scope>FUNCTION</scope>
    <scope>SUBCELLULAR LOCATION</scope>
    <scope>INTERACTION WITH HIV-1 VIF (MICROBIAL INFECTION)</scope>
</reference>
<reference key="47">
    <citation type="journal article" date="2023" name="J. Biol. Chem.">
        <title>SHP-1 phosphatase acts as a coactivator of PCK1 transcription to control gluconeogenesis.</title>
        <authorList>
            <person name="Kumar A."/>
            <person name="Schwab M."/>
            <person name="Laborit Labrada B."/>
            <person name="Silveira M.A.D."/>
            <person name="Goudreault M."/>
            <person name="Fournier E."/>
            <person name="Bellmann K."/>
            <person name="Beauchemin N."/>
            <person name="Gingras A.C."/>
            <person name="Bilodeau S."/>
            <person name="Laplante M."/>
            <person name="Marette A."/>
        </authorList>
    </citation>
    <scope>FUNCTION</scope>
    <scope>SUBCELLULAR LOCATION</scope>
    <scope>INTERACTION WITH POLR2C AND POLR2J</scope>
    <scope>MUTAGENESIS OF CYS-453</scope>
</reference>
<reference key="48">
    <citation type="journal article" date="2023" name="Nat. Immunol.">
        <title>Harnessing CD3 diversity to optimize CAR T cells.</title>
        <authorList>
            <person name="Velasco Cardenas R.M."/>
            <person name="Brandl S.M."/>
            <person name="Melendez A.V."/>
            <person name="Schlaak A.E."/>
            <person name="Buschky A."/>
            <person name="Peters T."/>
            <person name="Beier F."/>
            <person name="Serrels B."/>
            <person name="Taromi S."/>
            <person name="Raute K."/>
            <person name="Hauri S."/>
            <person name="Gstaiger M."/>
            <person name="Lassmann S."/>
            <person name="Huppa J.B."/>
            <person name="Boerries M."/>
            <person name="Andrieux G."/>
            <person name="Bengsch B."/>
            <person name="Schamel W.W."/>
            <person name="Minguet S."/>
        </authorList>
    </citation>
    <scope>FUNCTION</scope>
</reference>
<reference key="49">
    <citation type="journal article" date="2024" name="Sci. Signal.">
        <title>The induction of SHP-1 degradation by TAOK3 ensures the responsiveness of T cells to TCR stimulation.</title>
        <authorList>
            <person name="Poirier A."/>
            <person name="Ormonde J.V.S."/>
            <person name="Aubry I."/>
            <person name="Abidin B.M."/>
            <person name="Feng C.H."/>
            <person name="Martinez-Cordova Z."/>
            <person name="Hincapie A.M."/>
            <person name="Wu C."/>
            <person name="Perez-Quintero L.A."/>
            <person name="Wang C.L."/>
            <person name="Gingras A.C."/>
            <person name="Madrenas J."/>
            <person name="Tremblay M.L."/>
        </authorList>
    </citation>
    <scope>PHOSPHORYLATION AT THR-394</scope>
    <scope>UBIQUITINATION</scope>
    <scope>FUNCTION</scope>
</reference>
<reference key="50">
    <citation type="journal article" date="2024" name="J. Biomed. Sci.">
        <title>Association of TRAIL receptor with phosphatase SHP-1 enables repressing T cell receptor signaling and T cell activation through inactivating Lck.</title>
        <authorList>
            <person name="Chyuan I.T."/>
            <person name="Liao H.J."/>
            <person name="Tan T.H."/>
            <person name="Chuang H.C."/>
            <person name="Chu Y.C."/>
            <person name="Pan M.H."/>
            <person name="Wu C.S."/>
            <person name="Chu C.L."/>
            <person name="Sheu B.C."/>
            <person name="Hsu P.N."/>
        </authorList>
    </citation>
    <scope>FUNCTION</scope>
    <scope>INTERACTION WITH TNFRSF10A</scope>
    <scope>CATALYTIC ACTIVITY</scope>
</reference>
<reference key="51">
    <citation type="journal article" date="1998" name="J. Biol. Chem.">
        <title>Crystal structure of the catalytic domain of protein-tyrosine phosphatase SHP-1.</title>
        <authorList>
            <person name="Yang J."/>
            <person name="Liang X."/>
            <person name="Niu T."/>
            <person name="Meng W."/>
            <person name="Zhao Z."/>
            <person name="Zhou G.W."/>
        </authorList>
    </citation>
    <scope>X-RAY CRYSTALLOGRAPHY (2.5 ANGSTROMS) OF 248-399</scope>
</reference>
<reference key="52">
    <citation type="journal article" date="2003" name="J. Biol. Chem.">
        <title>Crystal structure of human protein-tyrosine phosphatase SHP-1.</title>
        <authorList>
            <person name="Yang J."/>
            <person name="Liu L."/>
            <person name="He D."/>
            <person name="Song X."/>
            <person name="Liang X."/>
            <person name="Zhao Z.J."/>
            <person name="Zhou G.W."/>
        </authorList>
    </citation>
    <scope>X-RAY CRYSTALLOGRAPHY (2.8 ANGSTROMS) OF 1-532</scope>
    <scope>DOMAIN SH2</scope>
</reference>
<reference key="53">
    <citation type="submission" date="2005-11" db="PDB data bank">
        <title>Solution structures of the SH2 domain of human protein-tyrosine phosphatase SHP-1.</title>
        <authorList>
            <consortium name="RIKEN structural genomics initiative (RSGI)"/>
        </authorList>
    </citation>
    <scope>STRUCTURE BY NMR OF 110-214</scope>
</reference>
<reference key="54">
    <citation type="journal article" date="2011" name="J. Cell. Biochem.">
        <title>Crystal structure of human protein tyrosine phosphatase SHP-1 in the open conformation.</title>
        <authorList>
            <person name="Wang W."/>
            <person name="Liu L."/>
            <person name="Song X."/>
            <person name="Mo Y."/>
            <person name="Komma C."/>
            <person name="Bellamy H.D."/>
            <person name="Zhao Z.J."/>
            <person name="Zhou G.W."/>
        </authorList>
    </citation>
    <scope>X-RAY CRYSTALLOGRAPHY (3.1 ANGSTROMS)</scope>
    <scope>DOMAIN SH2</scope>
</reference>
<proteinExistence type="evidence at protein level"/>
<evidence type="ECO:0000250" key="1"/>
<evidence type="ECO:0000250" key="2">
    <source>
        <dbReference type="UniProtKB" id="P29351"/>
    </source>
</evidence>
<evidence type="ECO:0000250" key="3">
    <source>
        <dbReference type="UniProtKB" id="P81718"/>
    </source>
</evidence>
<evidence type="ECO:0000255" key="4">
    <source>
        <dbReference type="PROSITE-ProRule" id="PRU00160"/>
    </source>
</evidence>
<evidence type="ECO:0000255" key="5">
    <source>
        <dbReference type="PROSITE-ProRule" id="PRU00191"/>
    </source>
</evidence>
<evidence type="ECO:0000255" key="6">
    <source>
        <dbReference type="PROSITE-ProRule" id="PRU10044"/>
    </source>
</evidence>
<evidence type="ECO:0000256" key="7">
    <source>
        <dbReference type="SAM" id="MobiDB-lite"/>
    </source>
</evidence>
<evidence type="ECO:0000269" key="8">
    <source>
    </source>
</evidence>
<evidence type="ECO:0000269" key="9">
    <source>
    </source>
</evidence>
<evidence type="ECO:0000269" key="10">
    <source>
    </source>
</evidence>
<evidence type="ECO:0000269" key="11">
    <source>
    </source>
</evidence>
<evidence type="ECO:0000269" key="12">
    <source>
    </source>
</evidence>
<evidence type="ECO:0000269" key="13">
    <source>
    </source>
</evidence>
<evidence type="ECO:0000269" key="14">
    <source>
    </source>
</evidence>
<evidence type="ECO:0000269" key="15">
    <source>
    </source>
</evidence>
<evidence type="ECO:0000269" key="16">
    <source>
    </source>
</evidence>
<evidence type="ECO:0000269" key="17">
    <source>
    </source>
</evidence>
<evidence type="ECO:0000269" key="18">
    <source>
    </source>
</evidence>
<evidence type="ECO:0000269" key="19">
    <source>
    </source>
</evidence>
<evidence type="ECO:0000269" key="20">
    <source>
    </source>
</evidence>
<evidence type="ECO:0000269" key="21">
    <source>
    </source>
</evidence>
<evidence type="ECO:0000269" key="22">
    <source>
    </source>
</evidence>
<evidence type="ECO:0000269" key="23">
    <source>
    </source>
</evidence>
<evidence type="ECO:0000269" key="24">
    <source>
    </source>
</evidence>
<evidence type="ECO:0000269" key="25">
    <source>
    </source>
</evidence>
<evidence type="ECO:0000269" key="26">
    <source>
    </source>
</evidence>
<evidence type="ECO:0000269" key="27">
    <source>
    </source>
</evidence>
<evidence type="ECO:0000269" key="28">
    <source>
    </source>
</evidence>
<evidence type="ECO:0000269" key="29">
    <source>
    </source>
</evidence>
<evidence type="ECO:0000269" key="30">
    <source>
    </source>
</evidence>
<evidence type="ECO:0000269" key="31">
    <source>
    </source>
</evidence>
<evidence type="ECO:0000269" key="32">
    <source>
    </source>
</evidence>
<evidence type="ECO:0000269" key="33">
    <source>
    </source>
</evidence>
<evidence type="ECO:0000269" key="34">
    <source>
    </source>
</evidence>
<evidence type="ECO:0000269" key="35">
    <source>
    </source>
</evidence>
<evidence type="ECO:0000269" key="36">
    <source>
    </source>
</evidence>
<evidence type="ECO:0000269" key="37">
    <source>
    </source>
</evidence>
<evidence type="ECO:0000269" key="38">
    <source>
    </source>
</evidence>
<evidence type="ECO:0000269" key="39">
    <source>
    </source>
</evidence>
<evidence type="ECO:0000269" key="40">
    <source>
    </source>
</evidence>
<evidence type="ECO:0000303" key="41">
    <source>
    </source>
</evidence>
<evidence type="ECO:0000303" key="42">
    <source>
    </source>
</evidence>
<evidence type="ECO:0000303" key="43">
    <source>
    </source>
</evidence>
<evidence type="ECO:0000305" key="44"/>
<evidence type="ECO:0007744" key="45">
    <source>
    </source>
</evidence>
<evidence type="ECO:0007829" key="46">
    <source>
        <dbReference type="PDB" id="1FPR"/>
    </source>
</evidence>
<evidence type="ECO:0007829" key="47">
    <source>
        <dbReference type="PDB" id="1GWZ"/>
    </source>
</evidence>
<evidence type="ECO:0007829" key="48">
    <source>
        <dbReference type="PDB" id="2B3O"/>
    </source>
</evidence>
<evidence type="ECO:0007829" key="49">
    <source>
        <dbReference type="PDB" id="3PS5"/>
    </source>
</evidence>
<evidence type="ECO:0007829" key="50">
    <source>
        <dbReference type="PDB" id="4GRZ"/>
    </source>
</evidence>
<evidence type="ECO:0007829" key="51">
    <source>
        <dbReference type="PDB" id="4GS0"/>
    </source>
</evidence>
<evidence type="ECO:0007829" key="52">
    <source>
        <dbReference type="PDB" id="4HJP"/>
    </source>
</evidence>
<evidence type="ECO:0007829" key="53">
    <source>
        <dbReference type="PDB" id="4HJQ"/>
    </source>
</evidence>
<evidence type="ECO:0007829" key="54">
    <source>
        <dbReference type="PDB" id="6SM5"/>
    </source>
</evidence>
<organism>
    <name type="scientific">Homo sapiens</name>
    <name type="common">Human</name>
    <dbReference type="NCBI Taxonomy" id="9606"/>
    <lineage>
        <taxon>Eukaryota</taxon>
        <taxon>Metazoa</taxon>
        <taxon>Chordata</taxon>
        <taxon>Craniata</taxon>
        <taxon>Vertebrata</taxon>
        <taxon>Euteleostomi</taxon>
        <taxon>Mammalia</taxon>
        <taxon>Eutheria</taxon>
        <taxon>Euarchontoglires</taxon>
        <taxon>Primates</taxon>
        <taxon>Haplorrhini</taxon>
        <taxon>Catarrhini</taxon>
        <taxon>Hominidae</taxon>
        <taxon>Homo</taxon>
    </lineage>
</organism>
<protein>
    <recommendedName>
        <fullName>Tyrosine-protein phosphatase non-receptor type 6</fullName>
        <ecNumber evidence="28 33">3.1.3.48</ecNumber>
    </recommendedName>
    <alternativeName>
        <fullName>Hematopoietic cell protein-tyrosine phosphatase</fullName>
    </alternativeName>
    <alternativeName>
        <fullName>Protein-tyrosine phosphatase 1C</fullName>
        <shortName>PTP-1C</shortName>
    </alternativeName>
    <alternativeName>
        <fullName>Protein-tyrosine phosphatase SHP-1</fullName>
    </alternativeName>
    <alternativeName>
        <fullName>SH-PTP1</fullName>
    </alternativeName>
</protein>
<dbReference type="EC" id="3.1.3.48" evidence="28 33"/>
<dbReference type="EMBL" id="M74903">
    <property type="protein sequence ID" value="AAA35963.1"/>
    <property type="molecule type" value="mRNA"/>
</dbReference>
<dbReference type="EMBL" id="X62055">
    <property type="protein sequence ID" value="CAA43982.1"/>
    <property type="molecule type" value="mRNA"/>
</dbReference>
<dbReference type="EMBL" id="M77273">
    <property type="protein sequence ID" value="AAA36610.1"/>
    <property type="molecule type" value="mRNA"/>
</dbReference>
<dbReference type="EMBL" id="U15528">
    <property type="protein sequence ID" value="AAA82880.1"/>
    <property type="molecule type" value="Genomic_DNA"/>
</dbReference>
<dbReference type="EMBL" id="U15536">
    <property type="protein sequence ID" value="AAA82880.1"/>
    <property type="status" value="JOINED"/>
    <property type="molecule type" value="Genomic_DNA"/>
</dbReference>
<dbReference type="EMBL" id="U15535">
    <property type="protein sequence ID" value="AAA82880.1"/>
    <property type="status" value="JOINED"/>
    <property type="molecule type" value="Genomic_DNA"/>
</dbReference>
<dbReference type="EMBL" id="U15534">
    <property type="protein sequence ID" value="AAA82880.1"/>
    <property type="status" value="JOINED"/>
    <property type="molecule type" value="Genomic_DNA"/>
</dbReference>
<dbReference type="EMBL" id="U15533">
    <property type="protein sequence ID" value="AAA82880.1"/>
    <property type="status" value="JOINED"/>
    <property type="molecule type" value="Genomic_DNA"/>
</dbReference>
<dbReference type="EMBL" id="U15532">
    <property type="protein sequence ID" value="AAA82880.1"/>
    <property type="status" value="JOINED"/>
    <property type="molecule type" value="Genomic_DNA"/>
</dbReference>
<dbReference type="EMBL" id="U15531">
    <property type="protein sequence ID" value="AAA82880.1"/>
    <property type="status" value="JOINED"/>
    <property type="molecule type" value="Genomic_DNA"/>
</dbReference>
<dbReference type="EMBL" id="U15530">
    <property type="protein sequence ID" value="AAA82880.1"/>
    <property type="status" value="JOINED"/>
    <property type="molecule type" value="Genomic_DNA"/>
</dbReference>
<dbReference type="EMBL" id="U15529">
    <property type="protein sequence ID" value="AAA82880.1"/>
    <property type="status" value="JOINED"/>
    <property type="molecule type" value="Genomic_DNA"/>
</dbReference>
<dbReference type="EMBL" id="U15528">
    <property type="protein sequence ID" value="AAA82879.1"/>
    <property type="molecule type" value="Genomic_DNA"/>
</dbReference>
<dbReference type="EMBL" id="U15537">
    <property type="protein sequence ID" value="AAA82879.1"/>
    <property type="status" value="JOINED"/>
    <property type="molecule type" value="Genomic_DNA"/>
</dbReference>
<dbReference type="EMBL" id="U15535">
    <property type="protein sequence ID" value="AAA82879.1"/>
    <property type="status" value="JOINED"/>
    <property type="molecule type" value="Genomic_DNA"/>
</dbReference>
<dbReference type="EMBL" id="U15534">
    <property type="protein sequence ID" value="AAA82879.1"/>
    <property type="status" value="JOINED"/>
    <property type="molecule type" value="Genomic_DNA"/>
</dbReference>
<dbReference type="EMBL" id="U15533">
    <property type="protein sequence ID" value="AAA82879.1"/>
    <property type="status" value="JOINED"/>
    <property type="molecule type" value="Genomic_DNA"/>
</dbReference>
<dbReference type="EMBL" id="U15532">
    <property type="protein sequence ID" value="AAA82879.1"/>
    <property type="status" value="JOINED"/>
    <property type="molecule type" value="Genomic_DNA"/>
</dbReference>
<dbReference type="EMBL" id="U15531">
    <property type="protein sequence ID" value="AAA82879.1"/>
    <property type="status" value="JOINED"/>
    <property type="molecule type" value="Genomic_DNA"/>
</dbReference>
<dbReference type="EMBL" id="U15530">
    <property type="protein sequence ID" value="AAA82879.1"/>
    <property type="status" value="JOINED"/>
    <property type="molecule type" value="Genomic_DNA"/>
</dbReference>
<dbReference type="EMBL" id="U15529">
    <property type="protein sequence ID" value="AAA82879.1"/>
    <property type="status" value="JOINED"/>
    <property type="molecule type" value="Genomic_DNA"/>
</dbReference>
<dbReference type="EMBL" id="U47924">
    <property type="protein sequence ID" value="AAB51322.1"/>
    <property type="molecule type" value="Genomic_DNA"/>
</dbReference>
<dbReference type="EMBL" id="U47924">
    <property type="protein sequence ID" value="AAB51323.1"/>
    <property type="molecule type" value="Genomic_DNA"/>
</dbReference>
<dbReference type="EMBL" id="AF178946">
    <property type="protein sequence ID" value="AAD53317.1"/>
    <property type="molecule type" value="mRNA"/>
</dbReference>
<dbReference type="EMBL" id="AB079851">
    <property type="protein sequence ID" value="BAC81774.1"/>
    <property type="molecule type" value="Genomic_DNA"/>
</dbReference>
<dbReference type="EMBL" id="AB079851">
    <property type="protein sequence ID" value="BAC81775.1"/>
    <property type="molecule type" value="Genomic_DNA"/>
</dbReference>
<dbReference type="EMBL" id="AK290421">
    <property type="protein sequence ID" value="BAF83110.1"/>
    <property type="molecule type" value="mRNA"/>
</dbReference>
<dbReference type="EMBL" id="CH471116">
    <property type="protein sequence ID" value="EAW88703.1"/>
    <property type="molecule type" value="Genomic_DNA"/>
</dbReference>
<dbReference type="EMBL" id="CH471116">
    <property type="protein sequence ID" value="EAW88704.1"/>
    <property type="molecule type" value="Genomic_DNA"/>
</dbReference>
<dbReference type="EMBL" id="BC002523">
    <property type="protein sequence ID" value="AAH02523.1"/>
    <property type="molecule type" value="mRNA"/>
</dbReference>
<dbReference type="EMBL" id="BC007667">
    <property type="protein sequence ID" value="AAH07667.1"/>
    <property type="molecule type" value="mRNA"/>
</dbReference>
<dbReference type="CCDS" id="CCDS41744.1">
    <molecule id="P29350-3"/>
</dbReference>
<dbReference type="CCDS" id="CCDS44820.1">
    <molecule id="P29350-1"/>
</dbReference>
<dbReference type="CCDS" id="CCDS44821.1">
    <molecule id="P29350-4"/>
</dbReference>
<dbReference type="PIR" id="B42031">
    <property type="entry name" value="S20825"/>
</dbReference>
<dbReference type="RefSeq" id="NP_002822.2">
    <molecule id="P29350-1"/>
    <property type="nucleotide sequence ID" value="NM_002831.5"/>
</dbReference>
<dbReference type="RefSeq" id="NP_536858.1">
    <molecule id="P29350-3"/>
    <property type="nucleotide sequence ID" value="NM_080548.5"/>
</dbReference>
<dbReference type="RefSeq" id="NP_536859.1">
    <molecule id="P29350-4"/>
    <property type="nucleotide sequence ID" value="NM_080549.4"/>
</dbReference>
<dbReference type="RefSeq" id="XP_011519290.1">
    <molecule id="P29350-3"/>
    <property type="nucleotide sequence ID" value="XM_011520988.2"/>
</dbReference>
<dbReference type="RefSeq" id="XP_024304874.1">
    <molecule id="P29350-1"/>
    <property type="nucleotide sequence ID" value="XM_024449106.1"/>
</dbReference>
<dbReference type="RefSeq" id="XP_054228689.1">
    <molecule id="P29350-3"/>
    <property type="nucleotide sequence ID" value="XM_054372714.1"/>
</dbReference>
<dbReference type="RefSeq" id="XP_054228690.1">
    <molecule id="P29350-1"/>
    <property type="nucleotide sequence ID" value="XM_054372715.1"/>
</dbReference>
<dbReference type="PDB" id="1FPR">
    <property type="method" value="X-ray"/>
    <property type="resolution" value="2.50 A"/>
    <property type="chains" value="A=243-526"/>
</dbReference>
<dbReference type="PDB" id="1GWZ">
    <property type="method" value="X-ray"/>
    <property type="resolution" value="2.50 A"/>
    <property type="chains" value="A=243-541"/>
</dbReference>
<dbReference type="PDB" id="1X6C">
    <property type="method" value="NMR"/>
    <property type="chains" value="A=110-214"/>
</dbReference>
<dbReference type="PDB" id="2B3O">
    <property type="method" value="X-ray"/>
    <property type="resolution" value="2.80 A"/>
    <property type="chains" value="A=1-532"/>
</dbReference>
<dbReference type="PDB" id="2RMX">
    <property type="method" value="NMR"/>
    <property type="chains" value="A=110-214"/>
</dbReference>
<dbReference type="PDB" id="2YU7">
    <property type="method" value="NMR"/>
    <property type="chains" value="A=110-214"/>
</dbReference>
<dbReference type="PDB" id="3PS5">
    <property type="method" value="X-ray"/>
    <property type="resolution" value="3.10 A"/>
    <property type="chains" value="A=1-595"/>
</dbReference>
<dbReference type="PDB" id="4GRY">
    <property type="method" value="X-ray"/>
    <property type="resolution" value="1.70 A"/>
    <property type="chains" value="A=243-528"/>
</dbReference>
<dbReference type="PDB" id="4GRZ">
    <property type="method" value="X-ray"/>
    <property type="resolution" value="1.37 A"/>
    <property type="chains" value="A=243-528"/>
</dbReference>
<dbReference type="PDB" id="4GS0">
    <property type="method" value="X-ray"/>
    <property type="resolution" value="1.80 A"/>
    <property type="chains" value="A/B=243-528"/>
</dbReference>
<dbReference type="PDB" id="4HJP">
    <property type="method" value="X-ray"/>
    <property type="resolution" value="1.40 A"/>
    <property type="chains" value="A=243-528"/>
</dbReference>
<dbReference type="PDB" id="4HJQ">
    <property type="method" value="X-ray"/>
    <property type="resolution" value="1.80 A"/>
    <property type="chains" value="A/B=243-528"/>
</dbReference>
<dbReference type="PDB" id="6SM5">
    <property type="method" value="X-ray"/>
    <property type="resolution" value="2.75 A"/>
    <property type="chains" value="A=100-214"/>
</dbReference>
<dbReference type="PDB" id="8YHI">
    <property type="method" value="X-ray"/>
    <property type="resolution" value="1.75 A"/>
    <property type="chains" value="A=243-528"/>
</dbReference>
<dbReference type="PDBsum" id="1FPR"/>
<dbReference type="PDBsum" id="1GWZ"/>
<dbReference type="PDBsum" id="1X6C"/>
<dbReference type="PDBsum" id="2B3O"/>
<dbReference type="PDBsum" id="2RMX"/>
<dbReference type="PDBsum" id="2YU7"/>
<dbReference type="PDBsum" id="3PS5"/>
<dbReference type="PDBsum" id="4GRY"/>
<dbReference type="PDBsum" id="4GRZ"/>
<dbReference type="PDBsum" id="4GS0"/>
<dbReference type="PDBsum" id="4HJP"/>
<dbReference type="PDBsum" id="4HJQ"/>
<dbReference type="PDBsum" id="6SM5"/>
<dbReference type="PDBsum" id="8YHI"/>
<dbReference type="SMR" id="P29350"/>
<dbReference type="BioGRID" id="111742">
    <property type="interactions" value="235"/>
</dbReference>
<dbReference type="CORUM" id="P29350"/>
<dbReference type="DIP" id="DIP-31002N"/>
<dbReference type="FunCoup" id="P29350">
    <property type="interactions" value="1765"/>
</dbReference>
<dbReference type="IntAct" id="P29350">
    <property type="interactions" value="126"/>
</dbReference>
<dbReference type="MINT" id="P29350"/>
<dbReference type="STRING" id="9606.ENSP00000391592"/>
<dbReference type="BindingDB" id="P29350"/>
<dbReference type="ChEMBL" id="CHEMBL3166"/>
<dbReference type="DrugBank" id="DB01133">
    <property type="generic name" value="Tiludronic acid"/>
</dbReference>
<dbReference type="DrugCentral" id="P29350"/>
<dbReference type="MoonDB" id="P29350">
    <property type="type" value="Predicted"/>
</dbReference>
<dbReference type="DEPOD" id="PTPN6"/>
<dbReference type="GlyCosmos" id="P29350">
    <property type="glycosylation" value="2 sites, 2 glycans"/>
</dbReference>
<dbReference type="GlyGen" id="P29350">
    <property type="glycosylation" value="3 sites, 2 O-linked glycans (3 sites)"/>
</dbReference>
<dbReference type="iPTMnet" id="P29350"/>
<dbReference type="PhosphoSitePlus" id="P29350"/>
<dbReference type="BioMuta" id="PTPN6"/>
<dbReference type="DMDM" id="131469"/>
<dbReference type="OGP" id="P29350"/>
<dbReference type="jPOST" id="P29350"/>
<dbReference type="MassIVE" id="P29350"/>
<dbReference type="PaxDb" id="9606-ENSP00000391592"/>
<dbReference type="PeptideAtlas" id="P29350"/>
<dbReference type="ProteomicsDB" id="32184"/>
<dbReference type="ProteomicsDB" id="54543">
    <molecule id="P29350-1"/>
</dbReference>
<dbReference type="ProteomicsDB" id="54544">
    <molecule id="P29350-2"/>
</dbReference>
<dbReference type="ProteomicsDB" id="54545">
    <molecule id="P29350-3"/>
</dbReference>
<dbReference type="Pumba" id="P29350"/>
<dbReference type="Antibodypedia" id="728">
    <property type="antibodies" value="1032 antibodies from 48 providers"/>
</dbReference>
<dbReference type="CPTC" id="P29350">
    <property type="antibodies" value="3 antibodies"/>
</dbReference>
<dbReference type="DNASU" id="5777"/>
<dbReference type="Ensembl" id="ENST00000318974.14">
    <molecule id="P29350-1"/>
    <property type="protein sequence ID" value="ENSP00000326010.9"/>
    <property type="gene ID" value="ENSG00000111679.17"/>
</dbReference>
<dbReference type="Ensembl" id="ENST00000399448.5">
    <molecule id="P29350-3"/>
    <property type="protein sequence ID" value="ENSP00000382376.1"/>
    <property type="gene ID" value="ENSG00000111679.17"/>
</dbReference>
<dbReference type="Ensembl" id="ENST00000456013.5">
    <molecule id="P29350-4"/>
    <property type="protein sequence ID" value="ENSP00000391592.1"/>
    <property type="gene ID" value="ENSG00000111679.17"/>
</dbReference>
<dbReference type="GeneID" id="5777"/>
<dbReference type="KEGG" id="hsa:5777"/>
<dbReference type="MANE-Select" id="ENST00000318974.14">
    <property type="protein sequence ID" value="ENSP00000326010.9"/>
    <property type="RefSeq nucleotide sequence ID" value="NM_002831.6"/>
    <property type="RefSeq protein sequence ID" value="NP_002822.2"/>
</dbReference>
<dbReference type="UCSC" id="uc001qsb.3">
    <molecule id="P29350-1"/>
    <property type="organism name" value="human"/>
</dbReference>
<dbReference type="AGR" id="HGNC:9658"/>
<dbReference type="CTD" id="5777"/>
<dbReference type="DisGeNET" id="5777"/>
<dbReference type="GeneCards" id="PTPN6"/>
<dbReference type="HGNC" id="HGNC:9658">
    <property type="gene designation" value="PTPN6"/>
</dbReference>
<dbReference type="HPA" id="ENSG00000111679">
    <property type="expression patterns" value="Tissue enhanced (bone marrow, lymphoid tissue)"/>
</dbReference>
<dbReference type="MalaCards" id="PTPN6"/>
<dbReference type="MIM" id="176883">
    <property type="type" value="gene"/>
</dbReference>
<dbReference type="neXtProt" id="NX_P29350"/>
<dbReference type="OpenTargets" id="ENSG00000111679"/>
<dbReference type="Orphanet" id="538869">
    <property type="disease" value="Bullous pyoderma gangrenosum"/>
</dbReference>
<dbReference type="Orphanet" id="538863">
    <property type="disease" value="Classic pyoderma gangrenosum"/>
</dbReference>
<dbReference type="Orphanet" id="538866">
    <property type="disease" value="Pustular pyoderma gangrenosum"/>
</dbReference>
<dbReference type="Orphanet" id="3243">
    <property type="disease" value="Sweet syndrome"/>
</dbReference>
<dbReference type="Orphanet" id="538872">
    <property type="disease" value="Vegetative pyoderma gangrenosum"/>
</dbReference>
<dbReference type="PharmGKB" id="PA34002"/>
<dbReference type="VEuPathDB" id="HostDB:ENSG00000111679"/>
<dbReference type="eggNOG" id="KOG0790">
    <property type="taxonomic scope" value="Eukaryota"/>
</dbReference>
<dbReference type="GeneTree" id="ENSGT00940000159480"/>
<dbReference type="InParanoid" id="P29350"/>
<dbReference type="OMA" id="VKIMCEN"/>
<dbReference type="OrthoDB" id="8815311at2759"/>
<dbReference type="PAN-GO" id="P29350">
    <property type="GO annotations" value="7 GO annotations based on evolutionary models"/>
</dbReference>
<dbReference type="PhylomeDB" id="P29350"/>
<dbReference type="TreeFam" id="TF351632"/>
<dbReference type="BRENDA" id="3.1.3.48">
    <property type="organism ID" value="2681"/>
</dbReference>
<dbReference type="PathwayCommons" id="P29350"/>
<dbReference type="Reactome" id="R-HSA-114604">
    <property type="pathway name" value="GPVI-mediated activation cascade"/>
</dbReference>
<dbReference type="Reactome" id="R-HSA-1433559">
    <property type="pathway name" value="Regulation of KIT signaling"/>
</dbReference>
<dbReference type="Reactome" id="R-HSA-201556">
    <property type="pathway name" value="Signaling by ALK"/>
</dbReference>
<dbReference type="Reactome" id="R-HSA-210990">
    <property type="pathway name" value="PECAM1 interactions"/>
</dbReference>
<dbReference type="Reactome" id="R-HSA-389948">
    <property type="pathway name" value="Co-inhibition by PD-1"/>
</dbReference>
<dbReference type="Reactome" id="R-HSA-391160">
    <property type="pathway name" value="Signal regulatory protein family interactions"/>
</dbReference>
<dbReference type="Reactome" id="R-HSA-432142">
    <property type="pathway name" value="Platelet sensitization by LDL"/>
</dbReference>
<dbReference type="Reactome" id="R-HSA-512988">
    <property type="pathway name" value="Interleukin-3, Interleukin-5 and GM-CSF signaling"/>
</dbReference>
<dbReference type="Reactome" id="R-HSA-5690714">
    <property type="pathway name" value="CD22 mediated BCR regulation"/>
</dbReference>
<dbReference type="Reactome" id="R-HSA-6798695">
    <property type="pathway name" value="Neutrophil degranulation"/>
</dbReference>
<dbReference type="Reactome" id="R-HSA-877300">
    <property type="pathway name" value="Interferon gamma signaling"/>
</dbReference>
<dbReference type="Reactome" id="R-HSA-877312">
    <property type="pathway name" value="Regulation of IFNG signaling"/>
</dbReference>
<dbReference type="Reactome" id="R-HSA-9008059">
    <property type="pathway name" value="Interleukin-37 signaling"/>
</dbReference>
<dbReference type="Reactome" id="R-HSA-909733">
    <property type="pathway name" value="Interferon alpha/beta signaling"/>
</dbReference>
<dbReference type="Reactome" id="R-HSA-912526">
    <property type="pathway name" value="Interleukin receptor SHC signaling"/>
</dbReference>
<dbReference type="Reactome" id="R-HSA-912694">
    <property type="pathway name" value="Regulation of IFNA/IFNB signaling"/>
</dbReference>
<dbReference type="Reactome" id="R-HSA-9705671">
    <property type="pathway name" value="SARS-CoV-2 activates/modulates innate and adaptive immune responses"/>
</dbReference>
<dbReference type="Reactome" id="R-HSA-9725371">
    <property type="pathway name" value="Nuclear events stimulated by ALK signaling in cancer"/>
</dbReference>
<dbReference type="Reactome" id="R-HSA-982772">
    <property type="pathway name" value="Growth hormone receptor signaling"/>
</dbReference>
<dbReference type="Reactome" id="R-HSA-983695">
    <property type="pathway name" value="Antigen activates B Cell Receptor (BCR) leading to generation of second messengers"/>
</dbReference>
<dbReference type="Reactome" id="R-HSA-9927353">
    <property type="pathway name" value="Co-inhibition by BTLA"/>
</dbReference>
<dbReference type="SignaLink" id="P29350"/>
<dbReference type="SIGNOR" id="P29350"/>
<dbReference type="BioGRID-ORCS" id="5777">
    <property type="hits" value="24 hits in 1178 CRISPR screens"/>
</dbReference>
<dbReference type="ChiTaRS" id="PTPN6">
    <property type="organism name" value="human"/>
</dbReference>
<dbReference type="EvolutionaryTrace" id="P29350"/>
<dbReference type="GeneWiki" id="PTPN6"/>
<dbReference type="GenomeRNAi" id="5777"/>
<dbReference type="Pharos" id="P29350">
    <property type="development level" value="Tchem"/>
</dbReference>
<dbReference type="PRO" id="PR:P29350"/>
<dbReference type="Proteomes" id="UP000005640">
    <property type="component" value="Chromosome 12"/>
</dbReference>
<dbReference type="RNAct" id="P29350">
    <property type="molecule type" value="protein"/>
</dbReference>
<dbReference type="Bgee" id="ENSG00000111679">
    <property type="expression patterns" value="Expressed in granulocyte and 192 other cell types or tissues"/>
</dbReference>
<dbReference type="ExpressionAtlas" id="P29350">
    <property type="expression patterns" value="baseline and differential"/>
</dbReference>
<dbReference type="GO" id="GO:0042105">
    <property type="term" value="C:alpha-beta T cell receptor complex"/>
    <property type="evidence" value="ECO:0007669"/>
    <property type="project" value="Ensembl"/>
</dbReference>
<dbReference type="GO" id="GO:0005911">
    <property type="term" value="C:cell-cell junction"/>
    <property type="evidence" value="ECO:0007669"/>
    <property type="project" value="Ensembl"/>
</dbReference>
<dbReference type="GO" id="GO:0005737">
    <property type="term" value="C:cytoplasm"/>
    <property type="evidence" value="ECO:0000314"/>
    <property type="project" value="UniProtKB"/>
</dbReference>
<dbReference type="GO" id="GO:0005829">
    <property type="term" value="C:cytosol"/>
    <property type="evidence" value="ECO:0000304"/>
    <property type="project" value="Reactome"/>
</dbReference>
<dbReference type="GO" id="GO:0070062">
    <property type="term" value="C:extracellular exosome"/>
    <property type="evidence" value="ECO:0007005"/>
    <property type="project" value="UniProtKB"/>
</dbReference>
<dbReference type="GO" id="GO:0005576">
    <property type="term" value="C:extracellular region"/>
    <property type="evidence" value="ECO:0000304"/>
    <property type="project" value="Reactome"/>
</dbReference>
<dbReference type="GO" id="GO:0016020">
    <property type="term" value="C:membrane"/>
    <property type="evidence" value="ECO:0000304"/>
    <property type="project" value="ProtInc"/>
</dbReference>
<dbReference type="GO" id="GO:0005730">
    <property type="term" value="C:nucleolus"/>
    <property type="evidence" value="ECO:0000314"/>
    <property type="project" value="HPA"/>
</dbReference>
<dbReference type="GO" id="GO:0005654">
    <property type="term" value="C:nucleoplasm"/>
    <property type="evidence" value="ECO:0000314"/>
    <property type="project" value="HPA"/>
</dbReference>
<dbReference type="GO" id="GO:0005634">
    <property type="term" value="C:nucleus"/>
    <property type="evidence" value="ECO:0000314"/>
    <property type="project" value="BHF-UCL"/>
</dbReference>
<dbReference type="GO" id="GO:0005886">
    <property type="term" value="C:plasma membrane"/>
    <property type="evidence" value="ECO:0000314"/>
    <property type="project" value="UniProt"/>
</dbReference>
<dbReference type="GO" id="GO:0032991">
    <property type="term" value="C:protein-containing complex"/>
    <property type="evidence" value="ECO:0000315"/>
    <property type="project" value="UniProtKB"/>
</dbReference>
<dbReference type="GO" id="GO:0035580">
    <property type="term" value="C:specific granule lumen"/>
    <property type="evidence" value="ECO:0000304"/>
    <property type="project" value="Reactome"/>
</dbReference>
<dbReference type="GO" id="GO:1904724">
    <property type="term" value="C:tertiary granule lumen"/>
    <property type="evidence" value="ECO:0000304"/>
    <property type="project" value="Reactome"/>
</dbReference>
<dbReference type="GO" id="GO:0050839">
    <property type="term" value="F:cell adhesion molecule binding"/>
    <property type="evidence" value="ECO:0007669"/>
    <property type="project" value="Ensembl"/>
</dbReference>
<dbReference type="GO" id="GO:0004726">
    <property type="term" value="F:non-membrane spanning protein tyrosine phosphatase activity"/>
    <property type="evidence" value="ECO:0000318"/>
    <property type="project" value="GO_Central"/>
</dbReference>
<dbReference type="GO" id="GO:0140031">
    <property type="term" value="F:phosphorylation-dependent protein binding"/>
    <property type="evidence" value="ECO:0000353"/>
    <property type="project" value="UniProtKB"/>
</dbReference>
<dbReference type="GO" id="GO:0001784">
    <property type="term" value="F:phosphotyrosine residue binding"/>
    <property type="evidence" value="ECO:0000353"/>
    <property type="project" value="UniProtKB"/>
</dbReference>
<dbReference type="GO" id="GO:0019901">
    <property type="term" value="F:protein kinase binding"/>
    <property type="evidence" value="ECO:0000353"/>
    <property type="project" value="UniProtKB"/>
</dbReference>
<dbReference type="GO" id="GO:0004725">
    <property type="term" value="F:protein tyrosine phosphatase activity"/>
    <property type="evidence" value="ECO:0000314"/>
    <property type="project" value="UniProt"/>
</dbReference>
<dbReference type="GO" id="GO:0042169">
    <property type="term" value="F:SH2 domain binding"/>
    <property type="evidence" value="ECO:0007669"/>
    <property type="project" value="Ensembl"/>
</dbReference>
<dbReference type="GO" id="GO:0017124">
    <property type="term" value="F:SH3 domain binding"/>
    <property type="evidence" value="ECO:0007669"/>
    <property type="project" value="Ensembl"/>
</dbReference>
<dbReference type="GO" id="GO:0005001">
    <property type="term" value="F:transmembrane receptor protein tyrosine phosphatase activity"/>
    <property type="evidence" value="ECO:0000314"/>
    <property type="project" value="UniProtKB"/>
</dbReference>
<dbReference type="GO" id="GO:0050853">
    <property type="term" value="P:B cell receptor signaling pathway"/>
    <property type="evidence" value="ECO:0007669"/>
    <property type="project" value="Ensembl"/>
</dbReference>
<dbReference type="GO" id="GO:0160162">
    <property type="term" value="P:CD27 signaling pathway"/>
    <property type="evidence" value="ECO:0000314"/>
    <property type="project" value="UniProt"/>
</dbReference>
<dbReference type="GO" id="GO:0030154">
    <property type="term" value="P:cell differentiation"/>
    <property type="evidence" value="ECO:0000314"/>
    <property type="project" value="UniProtKB"/>
</dbReference>
<dbReference type="GO" id="GO:0019221">
    <property type="term" value="P:cytokine-mediated signaling pathway"/>
    <property type="evidence" value="ECO:0000304"/>
    <property type="project" value="Reactome"/>
</dbReference>
<dbReference type="GO" id="GO:1905867">
    <property type="term" value="P:epididymis development"/>
    <property type="evidence" value="ECO:0007669"/>
    <property type="project" value="Ensembl"/>
</dbReference>
<dbReference type="GO" id="GO:0007186">
    <property type="term" value="P:G protein-coupled receptor signaling pathway"/>
    <property type="evidence" value="ECO:0000304"/>
    <property type="project" value="ProtInc"/>
</dbReference>
<dbReference type="GO" id="GO:0002244">
    <property type="term" value="P:hematopoietic progenitor cell differentiation"/>
    <property type="evidence" value="ECO:0007669"/>
    <property type="project" value="Ensembl"/>
</dbReference>
<dbReference type="GO" id="GO:0000165">
    <property type="term" value="P:MAPK cascade"/>
    <property type="evidence" value="ECO:0000318"/>
    <property type="project" value="GO_Central"/>
</dbReference>
<dbReference type="GO" id="GO:0035855">
    <property type="term" value="P:megakaryocyte development"/>
    <property type="evidence" value="ECO:0007669"/>
    <property type="project" value="Ensembl"/>
</dbReference>
<dbReference type="GO" id="GO:0000278">
    <property type="term" value="P:mitotic cell cycle"/>
    <property type="evidence" value="ECO:0000318"/>
    <property type="project" value="GO_Central"/>
</dbReference>
<dbReference type="GO" id="GO:0042267">
    <property type="term" value="P:natural killer cell mediated cytotoxicity"/>
    <property type="evidence" value="ECO:0007669"/>
    <property type="project" value="Ensembl"/>
</dbReference>
<dbReference type="GO" id="GO:0016525">
    <property type="term" value="P:negative regulation of angiogenesis"/>
    <property type="evidence" value="ECO:0000314"/>
    <property type="project" value="UniProt"/>
</dbReference>
<dbReference type="GO" id="GO:0050859">
    <property type="term" value="P:negative regulation of B cell receptor signaling pathway"/>
    <property type="evidence" value="ECO:0000314"/>
    <property type="project" value="UniProt"/>
</dbReference>
<dbReference type="GO" id="GO:0008285">
    <property type="term" value="P:negative regulation of cell population proliferation"/>
    <property type="evidence" value="ECO:0000303"/>
    <property type="project" value="UniProtKB"/>
</dbReference>
<dbReference type="GO" id="GO:0002924">
    <property type="term" value="P:negative regulation of humoral immune response mediated by circulating immunoglobulin"/>
    <property type="evidence" value="ECO:0007669"/>
    <property type="project" value="Ensembl"/>
</dbReference>
<dbReference type="GO" id="GO:0106015">
    <property type="term" value="P:negative regulation of inflammatory response to wounding"/>
    <property type="evidence" value="ECO:0000314"/>
    <property type="project" value="UniProt"/>
</dbReference>
<dbReference type="GO" id="GO:0045824">
    <property type="term" value="P:negative regulation of innate immune response"/>
    <property type="evidence" value="ECO:0000314"/>
    <property type="project" value="UniProt"/>
</dbReference>
<dbReference type="GO" id="GO:0032715">
    <property type="term" value="P:negative regulation of interleukin-6 production"/>
    <property type="evidence" value="ECO:0000250"/>
    <property type="project" value="ARUK-UCL"/>
</dbReference>
<dbReference type="GO" id="GO:0031665">
    <property type="term" value="P:negative regulation of lipopolysaccharide-mediated signaling pathway"/>
    <property type="evidence" value="ECO:0000250"/>
    <property type="project" value="ARUK-UCL"/>
</dbReference>
<dbReference type="GO" id="GO:0043409">
    <property type="term" value="P:negative regulation of MAPK cascade"/>
    <property type="evidence" value="ECO:0007669"/>
    <property type="project" value="Ensembl"/>
</dbReference>
<dbReference type="GO" id="GO:0033007">
    <property type="term" value="P:negative regulation of mast cell activation involved in immune response"/>
    <property type="evidence" value="ECO:0007669"/>
    <property type="project" value="Ensembl"/>
</dbReference>
<dbReference type="GO" id="GO:1902564">
    <property type="term" value="P:negative regulation of neutrophil activation"/>
    <property type="evidence" value="ECO:0000314"/>
    <property type="project" value="UniProt"/>
</dbReference>
<dbReference type="GO" id="GO:0042130">
    <property type="term" value="P:negative regulation of T cell proliferation"/>
    <property type="evidence" value="ECO:0007669"/>
    <property type="project" value="Ensembl"/>
</dbReference>
<dbReference type="GO" id="GO:0050860">
    <property type="term" value="P:negative regulation of T cell receptor signaling pathway"/>
    <property type="evidence" value="ECO:0007669"/>
    <property type="project" value="Ensembl"/>
</dbReference>
<dbReference type="GO" id="GO:0032720">
    <property type="term" value="P:negative regulation of tumor necrosis factor production"/>
    <property type="evidence" value="ECO:0000250"/>
    <property type="project" value="ARUK-UCL"/>
</dbReference>
<dbReference type="GO" id="GO:0035335">
    <property type="term" value="P:peptidyl-tyrosine dephosphorylation"/>
    <property type="evidence" value="ECO:0000315"/>
    <property type="project" value="UniProtKB"/>
</dbReference>
<dbReference type="GO" id="GO:0018108">
    <property type="term" value="P:peptidyl-tyrosine phosphorylation"/>
    <property type="evidence" value="ECO:0000314"/>
    <property type="project" value="UniProtKB"/>
</dbReference>
<dbReference type="GO" id="GO:0070527">
    <property type="term" value="P:platelet aggregation"/>
    <property type="evidence" value="ECO:0007669"/>
    <property type="project" value="Ensembl"/>
</dbReference>
<dbReference type="GO" id="GO:0030220">
    <property type="term" value="P:platelet formation"/>
    <property type="evidence" value="ECO:0007669"/>
    <property type="project" value="Ensembl"/>
</dbReference>
<dbReference type="GO" id="GO:0033630">
    <property type="term" value="P:positive regulation of cell adhesion mediated by integrin"/>
    <property type="evidence" value="ECO:0007669"/>
    <property type="project" value="Ensembl"/>
</dbReference>
<dbReference type="GO" id="GO:0008284">
    <property type="term" value="P:positive regulation of cell population proliferation"/>
    <property type="evidence" value="ECO:0000315"/>
    <property type="project" value="BHF-UCL"/>
</dbReference>
<dbReference type="GO" id="GO:0051897">
    <property type="term" value="P:positive regulation of phosphatidylinositol 3-kinase/protein kinase B signal transduction"/>
    <property type="evidence" value="ECO:0000315"/>
    <property type="project" value="BHF-UCL"/>
</dbReference>
<dbReference type="GO" id="GO:0006470">
    <property type="term" value="P:protein dephosphorylation"/>
    <property type="evidence" value="ECO:0000314"/>
    <property type="project" value="UniProtKB"/>
</dbReference>
<dbReference type="GO" id="GO:0042981">
    <property type="term" value="P:regulation of apoptotic process"/>
    <property type="evidence" value="ECO:0000304"/>
    <property type="project" value="ProtInc"/>
</dbReference>
<dbReference type="GO" id="GO:0045577">
    <property type="term" value="P:regulation of B cell differentiation"/>
    <property type="evidence" value="ECO:0007669"/>
    <property type="project" value="Ensembl"/>
</dbReference>
<dbReference type="GO" id="GO:0070372">
    <property type="term" value="P:regulation of ERK1 and ERK2 cascade"/>
    <property type="evidence" value="ECO:0000314"/>
    <property type="project" value="UniProtKB"/>
</dbReference>
<dbReference type="GO" id="GO:2000045">
    <property type="term" value="P:regulation of G1/S transition of mitotic cell cycle"/>
    <property type="evidence" value="ECO:0000315"/>
    <property type="project" value="BHF-UCL"/>
</dbReference>
<dbReference type="GO" id="GO:0051279">
    <property type="term" value="P:regulation of release of sequestered calcium ion into cytosol"/>
    <property type="evidence" value="ECO:0007669"/>
    <property type="project" value="Ensembl"/>
</dbReference>
<dbReference type="GO" id="GO:0060338">
    <property type="term" value="P:regulation of type I interferon-mediated signaling pathway"/>
    <property type="evidence" value="ECO:0000304"/>
    <property type="project" value="Reactome"/>
</dbReference>
<dbReference type="GO" id="GO:0042110">
    <property type="term" value="P:T cell activation"/>
    <property type="evidence" value="ECO:0000314"/>
    <property type="project" value="UniProt"/>
</dbReference>
<dbReference type="GO" id="GO:0031295">
    <property type="term" value="P:T cell costimulation"/>
    <property type="evidence" value="ECO:0000304"/>
    <property type="project" value="Reactome"/>
</dbReference>
<dbReference type="GO" id="GO:0042098">
    <property type="term" value="P:T cell proliferation"/>
    <property type="evidence" value="ECO:0007669"/>
    <property type="project" value="Ensembl"/>
</dbReference>
<dbReference type="GO" id="GO:0050852">
    <property type="term" value="P:T cell receptor signaling pathway"/>
    <property type="evidence" value="ECO:0007669"/>
    <property type="project" value="Ensembl"/>
</dbReference>
<dbReference type="CDD" id="cd14606">
    <property type="entry name" value="PTPc-N6"/>
    <property type="match status" value="1"/>
</dbReference>
<dbReference type="CDD" id="cd09931">
    <property type="entry name" value="SH2_C-SH2_SHP_like"/>
    <property type="match status" value="1"/>
</dbReference>
<dbReference type="CDD" id="cd10340">
    <property type="entry name" value="SH2_N-SH2_SHP_like"/>
    <property type="match status" value="1"/>
</dbReference>
<dbReference type="FunFam" id="3.30.505.10:FF:000012">
    <property type="entry name" value="Tyrosine-protein phosphatase non-receptor type"/>
    <property type="match status" value="1"/>
</dbReference>
<dbReference type="FunFam" id="3.30.505.10:FF:000018">
    <property type="entry name" value="Tyrosine-protein phosphatase non-receptor type"/>
    <property type="match status" value="1"/>
</dbReference>
<dbReference type="FunFam" id="3.90.190.10:FF:000018">
    <property type="entry name" value="Tyrosine-protein phosphatase non-receptor type"/>
    <property type="match status" value="1"/>
</dbReference>
<dbReference type="Gene3D" id="3.90.190.10">
    <property type="entry name" value="Protein tyrosine phosphatase superfamily"/>
    <property type="match status" value="1"/>
</dbReference>
<dbReference type="Gene3D" id="3.30.505.10">
    <property type="entry name" value="SH2 domain"/>
    <property type="match status" value="2"/>
</dbReference>
<dbReference type="InterPro" id="IPR052123">
    <property type="entry name" value="Non-rcpt_Tyr_Phosphatase"/>
</dbReference>
<dbReference type="InterPro" id="IPR029021">
    <property type="entry name" value="Prot-tyrosine_phosphatase-like"/>
</dbReference>
<dbReference type="InterPro" id="IPR000242">
    <property type="entry name" value="PTP_cat"/>
</dbReference>
<dbReference type="InterPro" id="IPR000980">
    <property type="entry name" value="SH2"/>
</dbReference>
<dbReference type="InterPro" id="IPR036860">
    <property type="entry name" value="SH2_dom_sf"/>
</dbReference>
<dbReference type="InterPro" id="IPR016130">
    <property type="entry name" value="Tyr_Pase_AS"/>
</dbReference>
<dbReference type="InterPro" id="IPR003595">
    <property type="entry name" value="Tyr_Pase_cat"/>
</dbReference>
<dbReference type="InterPro" id="IPR000387">
    <property type="entry name" value="Tyr_Pase_dom"/>
</dbReference>
<dbReference type="InterPro" id="IPR012152">
    <property type="entry name" value="Tyr_Pase_non-rcpt_typ-6/11"/>
</dbReference>
<dbReference type="PANTHER" id="PTHR46257">
    <property type="entry name" value="TYROSINE-PROTEIN PHOSPHATASE CORKSCREW"/>
    <property type="match status" value="1"/>
</dbReference>
<dbReference type="PANTHER" id="PTHR46257:SF4">
    <property type="entry name" value="TYROSINE-PROTEIN PHOSPHATASE NON-RECEPTOR TYPE 6"/>
    <property type="match status" value="1"/>
</dbReference>
<dbReference type="Pfam" id="PF00017">
    <property type="entry name" value="SH2"/>
    <property type="match status" value="2"/>
</dbReference>
<dbReference type="Pfam" id="PF00102">
    <property type="entry name" value="Y_phosphatase"/>
    <property type="match status" value="1"/>
</dbReference>
<dbReference type="PIRSF" id="PIRSF000929">
    <property type="entry name" value="Tyr-Ptase_nr_6"/>
    <property type="match status" value="1"/>
</dbReference>
<dbReference type="PRINTS" id="PR00700">
    <property type="entry name" value="PRTYPHPHTASE"/>
</dbReference>
<dbReference type="PRINTS" id="PR00401">
    <property type="entry name" value="SH2DOMAIN"/>
</dbReference>
<dbReference type="SMART" id="SM00194">
    <property type="entry name" value="PTPc"/>
    <property type="match status" value="1"/>
</dbReference>
<dbReference type="SMART" id="SM00404">
    <property type="entry name" value="PTPc_motif"/>
    <property type="match status" value="1"/>
</dbReference>
<dbReference type="SMART" id="SM00252">
    <property type="entry name" value="SH2"/>
    <property type="match status" value="2"/>
</dbReference>
<dbReference type="SUPFAM" id="SSF52799">
    <property type="entry name" value="(Phosphotyrosine protein) phosphatases II"/>
    <property type="match status" value="1"/>
</dbReference>
<dbReference type="SUPFAM" id="SSF55550">
    <property type="entry name" value="SH2 domain"/>
    <property type="match status" value="2"/>
</dbReference>
<dbReference type="PROSITE" id="PS50001">
    <property type="entry name" value="SH2"/>
    <property type="match status" value="2"/>
</dbReference>
<dbReference type="PROSITE" id="PS00383">
    <property type="entry name" value="TYR_PHOSPHATASE_1"/>
    <property type="match status" value="1"/>
</dbReference>
<dbReference type="PROSITE" id="PS50056">
    <property type="entry name" value="TYR_PHOSPHATASE_2"/>
    <property type="match status" value="1"/>
</dbReference>
<dbReference type="PROSITE" id="PS50055">
    <property type="entry name" value="TYR_PHOSPHATASE_PTP"/>
    <property type="match status" value="1"/>
</dbReference>
<sequence length="595" mass="67561">MVRWFHRDLSGLDAETLLKGRGVHGSFLARPSRKNQGDFSLSVRVGDQVTHIRIQNSGDFYDLYGGEKFATLTELVEYYTQQQGVLQDRDGTIIHLKYPLNCSDPTSERWYHGHMSGGQAETLLQAKGEPWTFLVRESLSQPGDFVLSVLSDQPKAGPGSPLRVTHIKVMCEGGRYTVGGLETFDSLTDLVEHFKKTGIEEASGAFVYLRQPYYATRVNAADIENRVLELNKKQESEDTAKAGFWEEFESLQKQEVKNLHQRLEGQRPENKGKNRYKNILPFDHSRVILQGRDSNIPGSDYINANYIKNQLLGPDENAKTYIASQGCLEATVNDFWQMAWQENSRVIVMTTREVEKGRNKCVPYWPEVGMQRAYGPYSVTNCGEHDTTEYKLRTLQVSPLDNGDLIREIWHYQYLSWPDHGVPSEPGGVLSFLDQINQRQESLPHAGPIIVHCSAGIGRTGTIIVIDMLMENISTKGLDCDIDIQKTIQMVRAQRSGMVQTEAQYKFIYVAIAQFIETTKKKLEVLQSQKGQESEYGNITYPPAMKNAHAKASRTSSKHKEDVYENLHTKNKREEKVKKQRSADKEKSKGSLKRK</sequence>
<name>PTN6_HUMAN</name>
<gene>
    <name type="primary">PTPN6</name>
    <name type="synonym">HCP</name>
    <name type="synonym">PTP1C</name>
</gene>
<keyword id="KW-0002">3D-structure</keyword>
<keyword id="KW-0025">Alternative splicing</keyword>
<keyword id="KW-0963">Cytoplasm</keyword>
<keyword id="KW-0378">Hydrolase</keyword>
<keyword id="KW-1017">Isopeptide bond</keyword>
<keyword id="KW-0539">Nucleus</keyword>
<keyword id="KW-0597">Phosphoprotein</keyword>
<keyword id="KW-0904">Protein phosphatase</keyword>
<keyword id="KW-1267">Proteomics identification</keyword>
<keyword id="KW-1185">Reference proteome</keyword>
<keyword id="KW-0677">Repeat</keyword>
<keyword id="KW-0727">SH2 domain</keyword>
<keyword id="KW-0832">Ubl conjugation</keyword>
<accession>P29350</accession>
<accession>A8K306</accession>
<accession>G3V0F8</accession>
<accession>Q969V8</accession>
<accession>Q9UK67</accession>